<gene>
    <name evidence="38" type="primary">SYNE1</name>
    <name type="synonym">C6orf98</name>
    <name type="synonym">KIAA0796</name>
    <name type="synonym">KIAA1262</name>
    <name type="synonym">KIAA1756</name>
    <name type="synonym">MYNE1</name>
</gene>
<organism>
    <name type="scientific">Homo sapiens</name>
    <name type="common">Human</name>
    <dbReference type="NCBI Taxonomy" id="9606"/>
    <lineage>
        <taxon>Eukaryota</taxon>
        <taxon>Metazoa</taxon>
        <taxon>Chordata</taxon>
        <taxon>Craniata</taxon>
        <taxon>Vertebrata</taxon>
        <taxon>Euteleostomi</taxon>
        <taxon>Mammalia</taxon>
        <taxon>Eutheria</taxon>
        <taxon>Euarchontoglires</taxon>
        <taxon>Primates</taxon>
        <taxon>Haplorrhini</taxon>
        <taxon>Catarrhini</taxon>
        <taxon>Hominidae</taxon>
        <taxon>Homo</taxon>
    </lineage>
</organism>
<protein>
    <recommendedName>
        <fullName evidence="37">Nesprin-1</fullName>
    </recommendedName>
    <alternativeName>
        <fullName>Enaptin</fullName>
    </alternativeName>
    <alternativeName>
        <fullName>KASH domain-containing protein 1</fullName>
        <shortName>KASH1</shortName>
    </alternativeName>
    <alternativeName>
        <fullName>Myocyte nuclear envelope protein 1</fullName>
        <shortName>Myne-1</shortName>
    </alternativeName>
    <alternativeName>
        <fullName>Nuclear envelope spectrin repeat protein 1</fullName>
    </alternativeName>
    <alternativeName>
        <fullName>Synaptic nuclear envelope protein 1</fullName>
        <shortName>Syne-1</shortName>
    </alternativeName>
</protein>
<sequence>MATSRGASRCPRDIANVMQRLQDEQEIVQKRTFTKWINSHLAKRKPPMVVDDLFEDMKDGVKLLALLEVLSGQKLPCEQGRRMKRIHAVANIGTALKFLEGRKIKLVNINSTDIADGRPSIVLGLMWTIILYFQIEELTSNLPQLQSLSSSASSVDSIVSSETPSPPSKRKVTTKIQGNAKKALLKWVQYTAGKQTGIEVKDFGKSWRSGVAFHSVIHAIRPELVDLETVKGRSNRENLEDAFTIAETELGIPRLLDPEDVDVDKPDEKSIMTYVAQFLKHYPDIHNASTDGQEDDEILPGFPSFANSVQNFKREDRVIFKEMKVWIEQFERDLTRAQMVESNLQDKYQSFKHFRVQYEMKRKQIEHLIQPLHRDGKLSLDQALVKQSWDRVTSRLFDWHIQLDKSLPAPLGTIGAWLYRAEVALREEITVQQVHEETANTIQRKLEQHKDLLQNTDAHKRAFHEIYRTRSVNGIPVPPDQLEDMAERFHFVSSTSELHLMKMEFLELKYRLLSLLVLAESKLKSWIIKYGRRESVEQLLQNYVSFIENSKFFEQYEVTYQILKQTAEMYVKADGSVEEAENVMKFMNETTAQWRNLSVEVRSVRSMLEEVISNWDRYGNTVASLQAWLEDAEKMLNQSENAKKDFFRNLPHWIQQHTAMNDAGNFLIETCDEMVSRDLKQQLLLLNGRWRELFMEVKQYAQADEMDRMKKEYTDCVVTLSAFATEAHKKLSEPLEVSFMNVKLLIQDLEDIEQRVPVMDAQYKIITKTAHLITKESPQEEGKEMFATMSKLKEQLTKVKECYSPLLYESQQLLIPLEELEKQMTSFYDSLGKINEIITVLEREAQSSALFKQKHQELLACQENCKKTLTLIEKGSQSVQKFVTLSNVLKHFDQTRLQRQIADIHVAFQSMVKKTGDWKKHVETNSRLMKKFEESRAELEKVLRIAQEGLEEKGDPEELLRRHTEFFSQLDQRVLNAFLKACDELTDILPEQEQQGLQEAVRKLHKQWKDLQGEAPYHLLHLKIDVEKNRFLASVEECRTELDRETKLMPQEGSEKIIKEHRVFFSDKGPHHLCEKRLQLIEELCVKLPVRDPVRDTPGTCHVTLKELRAAIDSTYRKLMEDPDKWKDYTSRFSEFSSWISTNETQLKGIKGEAIDTANHGEVKRAVEEIRNGVTKRGETLSWLKSRLKVLTEVSSENEAQKQGDELAKLSSSFKALVTLLSEVEKMLSNFGDCVQYKEIVKNSLEELISGSKEVQEQAEKILDTENLFEAQQLLLHHQQKTKRISAKKRDVQQQIAQAQQGEGGLPDRGHEELRKLESTLDGLERSRERQERRIQVTLRKWERFETNKETVVRYLFQTGSSHERFLSFSSLESLSSELEQTKEFSKRTESIAVQAENLVKEASEIPLGPQNKQLLQQQAKSIKEQVKKLEDTLEEDIKTMEMVKTKWDHFGSNFETLSVWITEKEKELNALETSSSAMDMQISQIKVTIQEIESKLSSIVGLEEEAQSFAQFVTTGESARIKAKLTQIRRYGEELREHAQCLEGTILGHLSQQQKFEENLRKIQQSVSEFEDKLAVPIKICSSATETYKVLQEHMDLCQALESLSSAITAFSASARKVVNRDSCVQEAAALQQQYEDILRRAKERQTALENLLAHWQRLEKELSSFLTWLERGEAKASSPEMDISADRVKVEGELQLIQALQNEVVSQASFYSKLLQLKESLFSVASKDDVKMMKLHLEQLDERWRDLPQIINKRINFLQSVVAEHQQFDELLLSFSVWIKLFLSELQTTSEISIMDHQVALTRHKDHAAEVESKKGELQSLQGHLAKLGSLGRAEDLHLLQGKAEDCFQLFEEASQVVERRQLALSHLAEFLQSHASLSGILRQLRQTVEATNSMNKNESDLIEKDLNDALQNAKALESAAVSLDGILSKAQYHLKIGSSEQRTSCRATADQLCGEVERIQNLLGTKQSEADALAVLKKAFQDQKEELLKSIEDIEERTDKERLKEPTRQALQQRLRVFNQLEDELNSHEHELCWLKDKAKQIAQKDVAFAPEVDREINRLEVTWDDTKRLIHENQGQCCGLIDLMREYQNLKSAVSKVLENASSVIVTRTTIKDQEDLKWAFSKHETAKNKMNYKQKDLDNFTSKGKHLLSELKKIHSSDFSLVKTDMESTVDKWLDVSEKLEENMDRLRVSLSIWDDVLSTRDEIEGWSNNCVPQMAENISNLDNHLRAEELLKEFESEVKNKALRLEELHSKVNDLKELTKNLETPPDLQFIEADLMQKLEHAKEITEVAKGTLKDFTAQSTQVEKFINDITTWFTKVEESLMNCAQNETCEALKKVKDIQKELQSQQSNISSTQENLNSLCRKYHSAELESLGRAMTGLIKKHEAVSQLCSKTQASLQESLEKHFSESMQEFQEWFLGAKAAAKESSDRTGDSKVLEAKLHDLQNILDSVSDGQSKLDAVTQEGQTLYAHLSKQIVSSIQEQITKANEEFQAFLKQCLKDKQALQDCASELGSFEDQHRKLNLWIHEMEERFNTENLGESKQHIPEKKNEVHKVEMFLGELLAARESLDKLSQRGQLLSEEGHGAGQEGRLCSQLLTSHQNLLRMTKEKLRSCQVALQEHEALEEALQSMWFWVKAIQDRLACAESTLGSKDTLEKRLSQIQDILLMKGEGEVKLNMAIGKGEQALRSSNKEGQRVIQTQLETLKEVWADIMSSSVHAQSTLESVISQWNDYVERKNQLEQWMESVDQKIEHPLQPQPGLKEKFVLLDHLQSILSEAEDHTRALHRLIAKSRELYEKTEDESFKDTAQEELKTQFNDIMTVAKEKMRKVEEIVKDHLMYLDAVHEFTDWLHSAKEELHRWSDMSGDSSATQKKLSKIKELIDSREIGASRLSRVESLAPEVKQNTTASGCELMHTEMQALRADWKQWEDSVFQTQSCLENLVSQMALSEQEFSGQVAQLEQALEQFSALLKTWAQQLTLLEGKNTDEEIVECWHKGQEILDALQKAEPRTEDLKSQLNELCRFSRDLSTYSGKVSGLIKEYNCLCLQASKGCQNKEQILQQRFRKAFRDFQQWLVNAKITTAKCFDIPQNISEVSTSLQKIQEFLSESENGQHKLNMMLSKGELLSTLLTKEKAKGIQAKVTAAKEDWKNFHSNLHQKESALENLKIQMKDFEVSAEPIQDWLSKTEKMVHESSNRLYDLPAKRREQQKLQSVLEEIHCYEPQLNRLKEKAQQLWEGQAASKSFRHRVSQLSSQYLALSNLTKEKVSRLDRIVAEHNQFSLGIKELQDWMTDAIHMLDSYCHPTSDKSVLDSRTLKLEALLSVKQEKEIQMKMIVTRGESVLQNTSPEGIPTIQQQLQSVKDMWASLLSAGIRCKSQLEGALSKWTSYQDGVRQFSGWMDSMEANLNESERQHAELRDKTTMLGKAKLLNEEVLSYSSLLETIEVKGAGMTEHYVTQLELQDLQERYRAIQERAKEAVTKSEKLVRLHQEYQRDLKAFEVWLGQEQEKLDQYSVLEGDAHTHETTLRDLQELQVHCAEGQALLNSVLHTREDVIPSGIPQAEDRALESLRQDWQAYQHRLSETRTQFNNVVNKLRLMEQKFQQVDEWLKTAEEKVSPRTRRQSNRATKEIQLHQMKKWHEEVTAYRDEVEEVGARAQEILDESHVNSRMGCQATQLTSRYQALLLQVLEQIKFLEEEIQSLEESESSLSSYSDWYGSTHKNFKNVATKIDKVDTVMMGKKLKTLEVLLKDMEKGHSLLKSAREKGERAVKYLEEGEAERLRKEIHDHMEQLKELTSTVRKEHMTLEKGLHLAKEFSDKCKALTQWIAEYQEILHVPEEPKMELYEKKAQLSKYKSLQQTVLSHEPSVKSVREKGEALLELVQDVTLKDKIDQLQSDYQDLCSIGKEHVFSLEAKVKDHEDYNSELQEVEKWLLQMSGRLVAPDLLETSSLETITQQLAHHKAMMEEIAGFEDRLNNLQMKGDTLIGQCADHLQAKLKQNVHAHLQGTKDSYSAICSTAQRMYQSLEHELQKHVSRQDTLQQCQAWLSAVQPDLEPSPQPPLSRAEAIKQVKHFRALQEQARTYLDLLCSMCDLSNASVKTTAKDIQQTEQTIEQKLVQAQNLTQGWEEIKHLKSELWIYLQDADQQLQNMKRRHSELELNIAQNMVSQVKDFVKKLQSKQASVNTIIEKVNKLTKKEESPEHKEINHLNDQWLDLCRQSNNLCLQREEDLQRTRDYHDCMNVVEVFLEKFTTEWDNLARSDAESTAVHLEALKKLALALQERKYAIEDLKDQKQKMIEHLNLDDKELVKEQTSHLEQRWFQLEDLIKRKIQVSVTNLEELNVVQSRFQELMEWAEEQQPNIAEALKQSPPPDMAQNLLMDHLAICSELEAKQMLLKSLIKDADRVMADLGLNERQVIQKALSDAQSHVNCLSDLVGQRRKYLNKALSEKTQFLMAVFQATSQIQQHERKIMFREHICLLPDDVSKQVKTCKSAQASLKTYQNEVTGLWAQGRELMKEVTEQEKSEVLGKLQELQSVYDSVLQKCSHRLQELEKNLVSRKHFKEDFDKACHWLKQADIVTFPEINLMNESSELHTQLAKYQNILEQSPEYENLLLTLQRTGQTILPSLNEVDHSYLSEKLNALPRQFNVIVALAKDKFYKVQEAILARKEYASLIELTTQSLSELEAQFLRMSKVPTDLAVEEALSLQDGCRAILDEVAGLGEAVDELNQKKEGFRSTGQPWQPDKMLHLVTLYHRLKRQTEQRVSLLEDTTSAYQEHEKMCQQLERQLKSVKEEQSKVNEETLPAEEKLKMYHSLAGSLQDSGIVLKRVTIHLEDLAPHLDPLAYEKARHQIQSWQGELKLLTSAIGETVTECESRMVQSIDFQTEMSRSLDWLRRVKAELSGPVYLDLNLQDIQEEIRKIQIHQEEVQSSLRIMNALSHKEKEKFTKAKELISADLEHSLAELSELDGDIQEALRTRQATLTEIYSQCQRYYQVFQAANDWLEDAQELLQLAGNGLDVESAEENLKSHMEFFSTEDQFHSNLEELHSLVATLDPLIKPTGKEDLEQKVASLELRSQRMSRDSGAQVDLLQRCTAQWHDYQKAREEVIELMNDTEKKLSEFSLLKTSSSHEAEEKLSEHKALVSVVNSFHEKIVALEEKASQLEKTGNDASKATLSRSMTTVWQRWTRLRAVAQDQEKILEDAVDEWTGFNNKVKKATEMIDQLQDKLPGSSAEKASKAELLTLLEYHDTFVLELEQQQSALGMLRQQTLSMLQDGAAPTPGEEPPLMQEITAMQDRCLNMQEKVKTNGKLVKQELKDREMVETQINSVKCWVQETKEYLGNPTIEIDAQLEELQILLTEATNHRQNIEKMAEEQKEKYLGLYTILPSELSLQLAEVALDLKIRDQIQDKIKEVEQSKATSQELSRQIQKLAKDLTTILTKLKAKTDNVVQAKTDQKVLGEELDGCNSKLMELDAAVQKFLEQNGQLGKPLAKKIGKLTELHQQTIRQAENRLSKLNQAASHLEEYNEMLELILKWIEKAKVLAHGTIAWNSASQLREQYILHQTLLEESKEIDSELEAMTEKLQYLTSVYCTEKMSQQVAELGRETEELRQMIKIRLQNLQDAAKDMKKFEAELKKLQAALEQAQATLTSPEVGRLSLKEQLSHRQHLLSEMESLKPKVQAVQLCQSALRIPEDVVASLPLCHAALRLQEEASRLQHTAIQQCNIMQEAVVQYEQYEQEMKHLQQLIEGAHREIEDKPVATSNIQELQAQISRHEELAQKIKGYQEQIASLNSKCKMLTMKAKHATMLLTVTEVEGLAEGTEDLDGELLPTPSAHPSVVMMTAGRCHTLLSPVTEESGEEGTNSEISSPPACRSPSPVANTDASVNQDIAYYQALSAERLQTDAAKIHPSTSASQEFYEPGLEPSATAKLGDLQRSWETLKNVISEKQRTLYEALERQQKYQDSLQSISTKMEAIELKLSESPEPGRSPESQMAEHQALMDEILMLQDEINELQSSLAEELVSESCEADPAEQLALQSTLTVLAERMSTIRMKASGKRQLLEEKLNDQLEEQRQEQALQRYRCEADELDSWLLSTKATLDTALSPPKEPMDMEAQLMDCQNMLVEIEQKVVALSELSVHNENLLLEGKAHTKDEAEQLAGKLRRLKGSLLELQRALHDKQLNMQGTAQEKEESDVDLTATQSPGVQEWLAQARTTWTQQRQSSLQQQKELEQELAEQKSLLRSVASRGEEILIQHSAAETSGDAGEKPDVLSQELGMEGEKSSAEDQMRMKWESLHQEFSTKQKLLQNVLEQEQEQVLYSRPNRLLSGVPLYKGDVPTQDKSAVTSLLDGLNQAFEEVSSQSGGAKRQSIHLEQKLYDGVSATSTWLDDVEERLFVATALLPEETETCLFNQEILAKDIKEMSEEMDKNKNLFSQAFPENGDNRDVIEDTLGCLLGRLSLLDSVVNQRCHQMKERLQQILNFQNDLKVLFTSLADNKYIILQKLANVFEQPVAEQIEAIQQAEDGLKEFDAGIIELKRRGDKLQVEQPSMQELSKLQDMYDELMMIIGSRRSGLNQNLTLKSQYERALQDLADLLETGQEKMAGDQKIIVSSKEEIQQLLDKHKEYFQGLESHMILTETLFRKIISFAVQKETQFHTELMAQASAVLKRAHKRGVELEYILETWSHLDEDQQELSRQLEVVESSIPSVGLVEENEDRLIDRITLYQHLKSSLNEYQPKLYQVLDDGKRLLISISCSDLESQLNQLGECWLSNTNKMSKELHRLETILKHWTRYQSESADLIHWLQSAKDRLEFWTQQSVTVPQELEMVRDHLNAFLEFSKEVDAQSSLKSSVLSTGNQLLRLKKVDTATLRSELSRIDSQWTDLLTNIPAVQEKLHQLQMDKLPSRHAISEVMSWISLMENVIQKDEDNIKNSIGYKAIHEYLQKYKGFKIDINCKQLTVDFVNQSVLQISSQDVESKRSDKTDFAEQLGAMNKSWQILQGLVTEKIQLLEGLLESWSEYENNVQCLKTWFETQEKRLKQQHRIGDQASVQNALKDCQDLEDLIKAKEKEVEKIEQNGLALIQNKKEDVSSIVMSTLRELGQTWANLDHMVGQLKILLKSVLDQWSSHKVAFDKINSYLMEARYSLSRFRLLTGSLEAVQVQVDNLQNLQDDLEKQERSLQKFGSITNQLLKECHPPVTETLTNTLKEVNMRWNNLLEEIAEQLQSSKALLQLWQRYKDYSKQCASTVQQQEDRTNELLKAATNKDIADDEVATWIQDCNDLLKGLGTVKDSLFFLHELGEQLKQQVDASAASAIQSDQLSLSQHLCALEQALCKQQTSLQAGVLDYETFAKSLEALEAWIVEAEEILQGQDPSHSSDLSTIQERMEELKGQMLKFSSMAPDLDRLNELGYRLPLNDKEIKRMQNLNRHWSLISSQTTERFSKLQSFLLQHQTFLEKCETWMEFLVQTEQKLAVEISGNYQHLLEQQRAHELFQAEMFSRQQILHSIIIDGQRLLEQGQVDDRDEFNLKLTLLSNQWQGVIRRAQQRRGIIDSQIRQWQRYREMAEKLRKWLVEVSYLPMSGLGSVPIPLQQARTLFDEVQFKEKVFLRQQGSYILTVEAGKQLLLSADSGAEAALQAELAEIQEKWKSASMRLEEQKKKLAFLLKDWEKCEKGIADSLEKLRTFKKKLSQSLPDHHEELHAEQMRCKELENAVGSWTDDLTQLSLLKDTLSAYISADDISILNERVELLQRQWEELCHQLSLRRQQIGERLNEWAVFSEKNKELCEWLTQMESKVSQNGDILIEEMIEKLKKDYQEEIAIAQENKIQLQQMGERLAKASHESKASEIEYKLGKVNDRWQHLLDLIAARVKKLKETLVAVQQLDKNMSSLRTWLAHIESELAKPIVYDSCNSEEIQRKLNEQQELQRDIEKHSTGVASVLNLCEVLLHDCDACATDAECDSIQQATRNLDRRWRNICAMSMERRLKIEETWRLWQKFLDDYSRFEDWLKSSERTAAFPSSSGVIYTVAKEELKKFEAFQRQVHECLTQLELINKQYRRLARENRTDSACSLKQMVHEGNQRWDNLQKRVTSILRRLKHFIGQREEFETARDSILVWLTEMDLQLTNIEHFSECDVQAKIKQLKAFQQEISLNHNKIEQIIAQGEQLIEKSEPLDAAIIEEELDELRRYCQEVFGRVERYHKKLIRLPLPDDEHDLSDRELELEDSAALSDLHWHDRSADSLLSPQPSSNLSLSLAQPLRSERSGRDTPASVDSIPLEWDHDYDLSRDLESAMSRALPSEDEEGQDDKDFYLRGAVGLSGDHSALESQIRQLGKALDDSRFQIQQTENIIRSKTPTGPELDTSYKGYMKLLGECSSSIDSVKRLEHKLKEEEESLPGFVNLHSTETQTAGVIDRWELLQAQALSKELRMKQNLQKWQQFNSDLNSIWAWLGDTEEELEQLQRLELSTDIQTIELQIKKLKELQKAVDHRKAIILSINLCSPEFTQADSKESRDLQDRLSQMNGRWDRVCSLLEEWRGLLQDALMQCQGFHEMSHGLLLMLENIDRRKNEIVPIDSNLDAEILQDHHKQLMQIKHELLESQLRVASLQDMSCQLLVNAEGTDCLEAKEKVHVIGNRLKLLLKEVSRHIKELEKLLDVSSSQQDLSSWSSADELDTSGSVSPTSGRSTPNRQKTPRGKCSLSQPGPSVSSPHSRSTKGGSDSSLSEPGPGRSGRGFLFRVLRAALPLQLLLLLLIGLACLVPMSEEDYSCALSNNFARSFHPMLRYTNGPPPL</sequence>
<comment type="function">
    <text evidence="1 8 17">Multi-isomeric modular protein which forms a linking network between organelles and the actin cytoskeleton to maintain the subcellular spatial organization. As a component of the LINC (LInker of Nucleoskeleton and Cytoskeleton) complex involved in the connection between the nuclear lamina and the cytoskeleton. The nucleocytoplasmic interactions established by the LINC complex play an important role in the transmission of mechanical forces across the nuclear envelope and in nuclear movement and positioning. May be involved in nucleus-centrosome attachment and nuclear migration in neural progenitors implicating LINC complex association with SUN1/2 and probably association with cytoplasmic dynein-dynactin motor complexes; SYNE1 and SYNE2 may act redundantly. Required for centrosome migration to the apical cell surface during early ciliogenesis. May be involved in nuclear remodeling during sperm head formation in spermatogenesis; a probable SUN3:SYNE1/KASH1 LINC complex may tether spermatid nuclei to posterior cytoskeletal structures such as the manchette.</text>
</comment>
<comment type="subunit">
    <text evidence="1 10 17 20 25">Core component of LINC complexes which are composed of inner nuclear membrane SUN domain-containing proteins coupled to outer nuclear membrane KASH domain-containing nesprins. SUN and KASH domain-containing proteins seem to bind each other promiscuously; however, differentially expression of LINC complex constituents can give rise to specific assemblies. At least SUN1/2-containing core LINC complexes are proposed to be hexameric composed of three protomers of each KASH and SUN domain-containing protein. The SUN2:SYNE1/KASH1 LINC complex is a heterohexamer; the homotrimeric cloverleave-like conformation of the SUN domain is a prerequisite for LINC complex formation in which three separate SYNE1/KASH1 peptides bind at the interface of adjacent SUN domains. Self-associates. Interacts with SYNE3. Interacts with SPAG4/SUN4. May interact with MUSK. Interacts with F-actin via its N-terminal domain. Interacts with EMD and LMNA in vitro. Interacts (via KASH domain) with TMEM258 (PubMed:28716842).</text>
</comment>
<comment type="interaction">
    <interactant intactId="EBI-928867">
        <id>Q8NF91</id>
    </interactant>
    <interactant intactId="EBI-529989">
        <id>Q9NRI5</id>
        <label>DISC1</label>
    </interactant>
    <organismsDiffer>false</organismsDiffer>
    <experiments>7</experiments>
</comment>
<comment type="interaction">
    <interactant intactId="EBI-928867">
        <id>Q8NF91</id>
    </interactant>
    <interactant intactId="EBI-2796904">
        <id>O94901</id>
        <label>SUN1</label>
    </interactant>
    <organismsDiffer>false</organismsDiffer>
    <experiments>6</experiments>
</comment>
<comment type="interaction">
    <interactant intactId="EBI-928867">
        <id>Q8NF91</id>
    </interactant>
    <interactant intactId="EBI-1044964">
        <id>Q9UH99</id>
        <label>SUN2</label>
    </interactant>
    <organismsDiffer>false</organismsDiffer>
    <experiments>7</experiments>
</comment>
<comment type="interaction">
    <interactant intactId="EBI-6170938">
        <id>Q8NF91-1</id>
    </interactant>
    <interactant intactId="EBI-2796904">
        <id>O94901</id>
        <label>SUN1</label>
    </interactant>
    <organismsDiffer>false</organismsDiffer>
    <experiments>2</experiments>
</comment>
<comment type="interaction">
    <interactant intactId="EBI-6170938">
        <id>Q8NF91-1</id>
    </interactant>
    <interactant intactId="EBI-1044964">
        <id>Q9UH99</id>
        <label>SUN2</label>
    </interactant>
    <organismsDiffer>false</organismsDiffer>
    <experiments>2</experiments>
</comment>
<comment type="interaction">
    <interactant intactId="EBI-10760352">
        <id>Q8NF91-3</id>
    </interactant>
    <interactant intactId="EBI-489887">
        <id>P50402</id>
        <label>EMD</label>
    </interactant>
    <organismsDiffer>false</organismsDiffer>
    <experiments>5</experiments>
</comment>
<comment type="interaction">
    <interactant intactId="EBI-10758913">
        <id>Q8NF91-11</id>
    </interactant>
    <interactant intactId="EBI-489887">
        <id>P50402</id>
        <label>EMD</label>
    </interactant>
    <organismsDiffer>false</organismsDiffer>
    <experiments>3</experiments>
</comment>
<comment type="interaction">
    <interactant intactId="EBI-10758913">
        <id>Q8NF91-11</id>
    </interactant>
    <interactant intactId="EBI-10758913">
        <id>Q8NF91-11</id>
        <label>SYNE1</label>
    </interactant>
    <organismsDiffer>false</organismsDiffer>
    <experiments>3</experiments>
</comment>
<comment type="subcellular location">
    <subcellularLocation>
        <location evidence="37">Nucleus outer membrane</location>
        <topology evidence="37">Single-pass type IV membrane protein</topology>
        <orientation evidence="37">Cytoplasmic side</orientation>
    </subcellularLocation>
    <subcellularLocation>
        <location>Nucleus</location>
    </subcellularLocation>
    <subcellularLocation>
        <location>Nucleus envelope</location>
    </subcellularLocation>
    <subcellularLocation>
        <location>Cytoplasm</location>
        <location>Cytoskeleton</location>
    </subcellularLocation>
    <subcellularLocation>
        <location>Cytoplasm</location>
        <location>Myofibril</location>
        <location>Sarcomere</location>
    </subcellularLocation>
    <text>The largest part of the protein is cytoplasmic, while its C-terminal part is associated with the nuclear envelope, most probably the outer nuclear membrane. In skeletal and smooth muscles, a significant amount is found in the sarcomeres. In myoblasts, relocalized from the nuclear envelope to the nucleus and cytoplasm during cell differentiation.</text>
</comment>
<comment type="subcellular location">
    <molecule>Isoform GSRP-56</molecule>
    <subcellularLocation>
        <location evidence="13">Golgi apparatus</location>
    </subcellularLocation>
</comment>
<comment type="alternative products">
    <event type="alternative splicing"/>
    <isoform>
        <id>Q8NF91-1</id>
        <name>1</name>
        <name>Nesprin-1 Giant</name>
        <name>Enaptin</name>
        <sequence type="displayed"/>
    </isoform>
    <isoform>
        <id>Q8NF91-2</id>
        <name>2</name>
        <name>Beta</name>
        <sequence type="described" ref="VSP_007130"/>
    </isoform>
    <isoform>
        <id>Q8NF91-3</id>
        <name>3</name>
        <name>Alpha</name>
        <sequence type="described" ref="VSP_007132 VSP_007144"/>
    </isoform>
    <isoform>
        <id>Q8NF91-4</id>
        <name>4</name>
        <sequence type="described" ref="VSP_007134 VSP_007139 VSP_007140 VSP_007144"/>
    </isoform>
    <isoform>
        <id>Q8NF91-5</id>
        <name>5</name>
        <sequence type="described" ref="VSP_007135 VSP_007136"/>
    </isoform>
    <isoform>
        <id>Q8NF91-6</id>
        <name>6</name>
        <sequence type="described" ref="VSP_007137 VSP_007138"/>
    </isoform>
    <isoform>
        <id>Q8NF91-7</id>
        <name>7</name>
        <sequence type="described" ref="VSP_007141 VSP_007142"/>
    </isoform>
    <isoform>
        <id>Q8NF91-8</id>
        <name>8</name>
        <name>Beta 2</name>
        <sequence type="described" ref="VSP_007131"/>
    </isoform>
    <isoform>
        <id>Q8NF91-9</id>
        <name>9</name>
        <name>Alpha 2</name>
        <sequence type="described" ref="VSP_007133 VSP_007143 VSP_007144"/>
    </isoform>
    <isoform>
        <id>Q8NF91-10</id>
        <name>10</name>
        <name>drop1</name>
        <sequence type="described" ref="VSP_057478 VSP_057479 VSP_057480"/>
    </isoform>
    <isoform>
        <id>Q8NF91-11</id>
        <name>11</name>
        <name>myne-1</name>
        <name>131kDa</name>
        <sequence type="described" ref="VSP_057476"/>
    </isoform>
    <isoform>
        <id>Q8NF91-12</id>
        <name>GSRP-56</name>
        <name>56kDa</name>
        <sequence type="described" ref="VSP_057477 VSP_057481 VSP_057482"/>
    </isoform>
</comment>
<comment type="tissue specificity">
    <text evidence="8 9 12 13 20">Expressed in HeLa, A431, A172 and HaCaT cells (at protein level). Widely expressed. Highly expressed in skeletal and smooth muscles, heart, spleen, peripheral blood leukocytes, pancreas, cerebellum, stomach, kidney and placenta. Isoform GSRP-56 is predominantly expressed in heart and skeletal muscle (at protein level).</text>
</comment>
<comment type="domain">
    <text evidence="17">The KASH domain, which contains a transmembrane domain, mediates the nuclear envelope targeting and is involved in the binding to SUN1 and SUN2 through recognition of their SUN domains.</text>
</comment>
<comment type="PTM">
    <text evidence="2">The disulfid bond with SUN1 or SUN2 is required for stability of the respective LINC complex under tensile forces.</text>
</comment>
<comment type="disease" evidence="15">
    <disease id="DI-01062">
        <name>Spinocerebellar ataxia, autosomal recessive, 8</name>
        <acronym>SCAR8</acronym>
        <description>A form of spinocerebellar ataxia, a clinically and genetically heterogeneous group of cerebellar disorders. Patients show progressive incoordination of gait and often poor coordination of hands, speech and eye movements, due to degeneration of the cerebellum with variable involvement of the brainstem and spinal cord. SCAR8 is an autosomal recessive form.</description>
        <dbReference type="MIM" id="610743"/>
    </disease>
    <text>The disease is caused by variants affecting the gene represented in this entry.</text>
</comment>
<comment type="disease" evidence="16">
    <disease id="DI-02519">
        <name>Emery-Dreifuss muscular dystrophy 4, autosomal dominant</name>
        <acronym>EDMD4</acronym>
        <description>A form of Emery-Dreifuss muscular dystrophy, a degenerative myopathy characterized by weakness and atrophy of muscle without involvement of the nervous system, early contractures of the elbows, Achilles tendons and spine, and cardiomyopathy associated with cardiac conduction defects.</description>
        <dbReference type="MIM" id="612998"/>
    </disease>
    <text>The disease is caused by variants affecting the gene represented in this entry.</text>
</comment>
<comment type="disease" evidence="19 22 24">
    <disease id="DI-05605">
        <name>Arthrogryposis multiplex congenita 3, myogenic type</name>
        <acronym>AMC3</acronym>
        <description>A form of arthrogryposis multiplex congenita, a heterogeneous group of disorders characterized by multiple joint contractures resulting, in some cases, from reduced or absent fetal movements. AMC3 is an autosomal recessive form characterized by decreased fetal movements, muscular hypotonia, delayed motor development, loss of ambulation, variable skeletal defects, and persistent contractures of interphalangeal joints.</description>
        <dbReference type="MIM" id="618484"/>
    </disease>
    <text>The disease is caused by variants affecting the gene represented in this entry.</text>
</comment>
<comment type="miscellaneous">
    <molecule>Isoform 10</molecule>
    <text evidence="18">Lost in uterus, cervix, kidney, lung, thyroid and pancreas carcinomas, already at early tumor stages.</text>
</comment>
<comment type="miscellaneous">
    <molecule>Isoform 11</molecule>
    <text evidence="37">Muscle-specific.</text>
</comment>
<comment type="miscellaneous">
    <molecule>Isoform GSRP-56</molecule>
    <text evidence="13">Interacts with TRPV2.</text>
</comment>
<comment type="similarity">
    <text evidence="37">Belongs to the nesprin family.</text>
</comment>
<comment type="sequence caution" evidence="37">
    <conflict type="erroneous initiation">
        <sequence resource="EMBL-CDS" id="AAC02992"/>
    </conflict>
    <text>Truncated N-terminus.</text>
</comment>
<comment type="sequence caution" evidence="37">
    <conflict type="erroneous initiation">
        <sequence resource="EMBL-CDS" id="AAH39121"/>
    </conflict>
    <text>Extended N-terminus.</text>
</comment>
<comment type="sequence caution" evidence="37">
    <conflict type="miscellaneous discrepancy">
        <sequence resource="EMBL-CDS" id="AAM95335"/>
    </conflict>
    <text>Contaminating sequence. Sequence of unknown origin.</text>
</comment>
<comment type="sequence caution" evidence="37">
    <conflict type="miscellaneous discrepancy">
        <sequence resource="EMBL-CDS" id="BAB71097"/>
    </conflict>
    <text>Chimeric cDNA.</text>
</comment>
<comment type="sequence caution" evidence="37">
    <conflict type="erroneous initiation">
        <sequence resource="EMBL-CDS" id="BAC04284"/>
    </conflict>
    <text>Truncated N-terminus.</text>
</comment>
<comment type="sequence caution" evidence="37">
    <conflict type="erroneous initiation">
        <sequence resource="EMBL-CDS" id="CAD28486"/>
    </conflict>
    <text>Truncated N-terminus.</text>
</comment>
<comment type="online information" name="Wikipedia">
    <link uri="https://en.wikipedia.org/wiki/Enaptin"/>
    <text>Enaptin entry</text>
</comment>
<feature type="chain" id="PRO_0000163591" description="Nesprin-1">
    <location>
        <begin position="1"/>
        <end position="8797"/>
    </location>
</feature>
<feature type="topological domain" description="Cytoplasmic" evidence="5">
    <location>
        <begin position="1"/>
        <end position="8746"/>
    </location>
</feature>
<feature type="transmembrane region" description="Helical; Anchor for type IV membrane protein" evidence="5">
    <location>
        <begin position="8747"/>
        <end position="8767"/>
    </location>
</feature>
<feature type="topological domain" description="Perinuclear space" evidence="5">
    <location>
        <begin position="8768"/>
        <end position="8797"/>
    </location>
</feature>
<feature type="domain" description="Calponin-homology (CH) 1" evidence="4">
    <location>
        <begin position="27"/>
        <end position="134"/>
    </location>
</feature>
<feature type="domain" description="Calponin-homology (CH) 2" evidence="4">
    <location>
        <begin position="178"/>
        <end position="283"/>
    </location>
</feature>
<feature type="repeat" description="Spectrin 1">
    <location>
        <begin position="314"/>
        <end position="397"/>
    </location>
</feature>
<feature type="repeat" description="Spectrin 2">
    <location>
        <begin position="398"/>
        <end position="502"/>
    </location>
</feature>
<feature type="repeat" description="Spectrin 3">
    <location>
        <begin position="503"/>
        <end position="609"/>
    </location>
</feature>
<feature type="repeat" description="Spectrin 4">
    <location>
        <begin position="610"/>
        <end position="703"/>
    </location>
</feature>
<feature type="repeat" description="Spectrin 5">
    <location>
        <begin position="704"/>
        <end position="815"/>
    </location>
</feature>
<feature type="repeat" description="Spectrin 6">
    <location>
        <begin position="816"/>
        <end position="923"/>
    </location>
</feature>
<feature type="repeat" description="Spectrin 7">
    <location>
        <begin position="924"/>
        <end position="1024"/>
    </location>
</feature>
<feature type="repeat" description="Spectrin 8">
    <location>
        <begin position="1025"/>
        <end position="1122"/>
    </location>
</feature>
<feature type="repeat" description="Spectrin 9">
    <location>
        <begin position="1123"/>
        <end position="1246"/>
    </location>
</feature>
<feature type="repeat" description="Spectrin 10">
    <location>
        <begin position="1247"/>
        <end position="1335"/>
    </location>
</feature>
<feature type="repeat" description="Spectrin 11">
    <location>
        <begin position="1336"/>
        <end position="1444"/>
    </location>
</feature>
<feature type="repeat" description="Spectrin 12">
    <location>
        <begin position="1445"/>
        <end position="1550"/>
    </location>
</feature>
<feature type="repeat" description="Spectrin 13">
    <location>
        <begin position="1551"/>
        <end position="1653"/>
    </location>
</feature>
<feature type="repeat" description="Spectrin 14">
    <location>
        <begin position="1654"/>
        <end position="1763"/>
    </location>
</feature>
<feature type="repeat" description="Spectrin 15">
    <location>
        <begin position="1764"/>
        <end position="1879"/>
    </location>
</feature>
<feature type="repeat" description="Spectrin 16">
    <location>
        <begin position="1880"/>
        <end position="1976"/>
    </location>
</feature>
<feature type="repeat" description="Spectrin 17">
    <location>
        <begin position="1977"/>
        <end position="2081"/>
    </location>
</feature>
<feature type="repeat" description="Spectrin 18">
    <location>
        <begin position="2082"/>
        <end position="2195"/>
    </location>
</feature>
<feature type="repeat" description="Spectrin 19">
    <location>
        <begin position="2196"/>
        <end position="2303"/>
    </location>
</feature>
<feature type="repeat" description="Spectrin 20">
    <location>
        <begin position="2304"/>
        <end position="2401"/>
    </location>
</feature>
<feature type="repeat" description="Spectrin 21">
    <location>
        <begin position="2402"/>
        <end position="2513"/>
    </location>
</feature>
<feature type="repeat" description="Spectrin 22">
    <location>
        <begin position="2514"/>
        <end position="2619"/>
    </location>
</feature>
<feature type="repeat" description="Spectrin 23">
    <location>
        <begin position="2620"/>
        <end position="2731"/>
    </location>
</feature>
<feature type="repeat" description="Spectrin 24">
    <location>
        <begin position="2732"/>
        <end position="2838"/>
    </location>
</feature>
<feature type="repeat" description="Spectrin 25">
    <location>
        <begin position="2839"/>
        <end position="2962"/>
    </location>
</feature>
<feature type="repeat" description="Spectrin 26">
    <location>
        <begin position="2963"/>
        <end position="3062"/>
    </location>
</feature>
<feature type="repeat" description="Spectrin 27">
    <location>
        <begin position="3063"/>
        <end position="3171"/>
    </location>
</feature>
<feature type="repeat" description="Spectrin 28">
    <location>
        <begin position="3172"/>
        <end position="3275"/>
    </location>
</feature>
<feature type="repeat" description="Spectrin 29">
    <location>
        <begin position="3276"/>
        <end position="3387"/>
    </location>
</feature>
<feature type="repeat" description="Spectrin 30">
    <location>
        <begin position="3388"/>
        <end position="3490"/>
    </location>
</feature>
<feature type="repeat" description="Spectrin 31">
    <location>
        <begin position="3491"/>
        <end position="3593"/>
    </location>
</feature>
<feature type="repeat" description="Spectrin 32">
    <location>
        <begin position="3594"/>
        <end position="3720"/>
    </location>
</feature>
<feature type="repeat" description="Spectrin 33">
    <location>
        <begin position="3721"/>
        <end position="3814"/>
    </location>
</feature>
<feature type="repeat" description="Spectrin 34">
    <location>
        <begin position="3815"/>
        <end position="3920"/>
    </location>
</feature>
<feature type="repeat" description="Spectrin 35">
    <location>
        <begin position="3921"/>
        <end position="4028"/>
    </location>
</feature>
<feature type="repeat" description="Spectrin 36">
    <location>
        <begin position="4029"/>
        <end position="4139"/>
    </location>
</feature>
<feature type="repeat" description="Spectrin 37">
    <location>
        <begin position="4140"/>
        <end position="4235"/>
    </location>
</feature>
<feature type="repeat" description="Spectrin 38">
    <location>
        <begin position="4236"/>
        <end position="4339"/>
    </location>
</feature>
<feature type="repeat" description="Spectrin 39">
    <location>
        <begin position="4340"/>
        <end position="4451"/>
    </location>
</feature>
<feature type="repeat" description="Spectrin 40">
    <location>
        <begin position="4452"/>
        <end position="4560"/>
    </location>
</feature>
<feature type="repeat" description="Spectrin 41">
    <location>
        <begin position="4561"/>
        <end position="4669"/>
    </location>
</feature>
<feature type="repeat" description="Spectrin 42">
    <location>
        <begin position="4670"/>
        <end position="4776"/>
    </location>
</feature>
<feature type="repeat" description="Spectrin 43">
    <location>
        <begin position="4777"/>
        <end position="4882"/>
    </location>
</feature>
<feature type="repeat" description="Spectrin 44">
    <location>
        <begin position="4883"/>
        <end position="4991"/>
    </location>
</feature>
<feature type="repeat" description="Spectrin 45">
    <location>
        <begin position="4992"/>
        <end position="5099"/>
    </location>
</feature>
<feature type="repeat" description="Spectrin 46">
    <location>
        <begin position="5100"/>
        <end position="5209"/>
    </location>
</feature>
<feature type="repeat" description="Spectrin 47">
    <location>
        <begin position="5210"/>
        <end position="5318"/>
    </location>
</feature>
<feature type="repeat" description="Spectrin 48">
    <location>
        <begin position="5319"/>
        <end position="5424"/>
    </location>
</feature>
<feature type="repeat" description="Spectrin 49">
    <location>
        <begin position="5425"/>
        <end position="5522"/>
    </location>
</feature>
<feature type="repeat" description="Spectrin 50">
    <location>
        <begin position="5523"/>
        <end position="5630"/>
    </location>
</feature>
<feature type="repeat" description="Spectrin 51">
    <location>
        <begin position="5631"/>
        <end position="5736"/>
    </location>
</feature>
<feature type="repeat" description="Spectrin 52">
    <location>
        <begin position="5737"/>
        <end position="5842"/>
    </location>
</feature>
<feature type="repeat" description="Spectrin 53">
    <location>
        <begin position="5962"/>
        <end position="6071"/>
    </location>
</feature>
<feature type="repeat" description="Spectrin 54">
    <location>
        <begin position="6072"/>
        <end position="6178"/>
    </location>
</feature>
<feature type="repeat" description="Spectrin 55">
    <location>
        <begin position="6374"/>
        <end position="6485"/>
    </location>
</feature>
<feature type="repeat" description="Spectrin 56">
    <location>
        <begin position="6486"/>
        <end position="6581"/>
    </location>
</feature>
<feature type="repeat" description="Spectrin 57">
    <location>
        <begin position="6582"/>
        <end position="6691"/>
    </location>
</feature>
<feature type="repeat" description="Spectrin 58">
    <location>
        <begin position="6692"/>
        <end position="6795"/>
    </location>
</feature>
<feature type="repeat" description="Spectrin 59">
    <location>
        <begin position="6796"/>
        <end position="6902"/>
    </location>
</feature>
<feature type="repeat" description="Spectrin 60">
    <location>
        <begin position="6903"/>
        <end position="7020"/>
    </location>
</feature>
<feature type="repeat" description="Spectrin 61">
    <location>
        <begin position="7021"/>
        <end position="7128"/>
    </location>
</feature>
<feature type="repeat" description="Spectrin 62">
    <location>
        <begin position="7129"/>
        <end position="7237"/>
    </location>
</feature>
<feature type="repeat" description="Spectrin 63">
    <location>
        <begin position="7238"/>
        <end position="7350"/>
    </location>
</feature>
<feature type="repeat" description="Spectrin 64">
    <location>
        <begin position="7351"/>
        <end position="7454"/>
    </location>
</feature>
<feature type="repeat" description="Spectrin 65">
    <location>
        <begin position="7455"/>
        <end position="7558"/>
    </location>
</feature>
<feature type="repeat" description="Spectrin 66">
    <location>
        <begin position="7559"/>
        <end position="7671"/>
    </location>
</feature>
<feature type="repeat" description="Spectrin 67">
    <location>
        <begin position="7672"/>
        <end position="7783"/>
    </location>
</feature>
<feature type="repeat" description="Spectrin 68">
    <location>
        <begin position="7784"/>
        <end position="7883"/>
    </location>
</feature>
<feature type="repeat" description="Spectrin 69">
    <location>
        <begin position="7884"/>
        <end position="7997"/>
    </location>
</feature>
<feature type="repeat" description="Spectrin 70">
    <location>
        <begin position="7998"/>
        <end position="8106"/>
    </location>
</feature>
<feature type="repeat" description="Spectrin 71">
    <location>
        <begin position="8107"/>
        <end position="8216"/>
    </location>
</feature>
<feature type="repeat" description="Spectrin 72">
    <location>
        <begin position="8329"/>
        <end position="8438"/>
    </location>
</feature>
<feature type="repeat" description="Spectrin 73">
    <location>
        <begin position="8439"/>
        <end position="8548"/>
    </location>
</feature>
<feature type="repeat" description="Spectrin 74">
    <location>
        <begin position="8549"/>
        <end position="8666"/>
    </location>
</feature>
<feature type="domain" description="KASH" evidence="5">
    <location>
        <begin position="8738"/>
        <end position="8797"/>
    </location>
</feature>
<feature type="region of interest" description="Actin-binding">
    <location>
        <begin position="1"/>
        <end position="289"/>
    </location>
</feature>
<feature type="region of interest" description="Disordered" evidence="6">
    <location>
        <begin position="5859"/>
        <end position="5886"/>
    </location>
</feature>
<feature type="region of interest" description="Disordered" evidence="6">
    <location>
        <begin position="8246"/>
        <end position="8279"/>
    </location>
</feature>
<feature type="region of interest" description="Disordered" evidence="6">
    <location>
        <begin position="8671"/>
        <end position="8734"/>
    </location>
</feature>
<feature type="coiled-coil region" evidence="3">
    <location>
        <begin position="314"/>
        <end position="8666"/>
    </location>
</feature>
<feature type="compositionally biased region" description="Low complexity" evidence="6">
    <location>
        <begin position="8247"/>
        <end position="8265"/>
    </location>
</feature>
<feature type="compositionally biased region" description="Polar residues" evidence="6">
    <location>
        <begin position="8680"/>
        <end position="8696"/>
    </location>
</feature>
<feature type="compositionally biased region" description="Polar residues" evidence="6">
    <location>
        <begin position="8704"/>
        <end position="8729"/>
    </location>
</feature>
<feature type="modified residue" description="Phosphoserine" evidence="1">
    <location>
        <position position="732"/>
    </location>
</feature>
<feature type="modified residue" description="Phosphothreonine" evidence="1">
    <location>
        <position position="2270"/>
    </location>
</feature>
<feature type="modified residue" description="Phosphoserine" evidence="1">
    <location>
        <position position="5657"/>
    </location>
</feature>
<feature type="modified residue" description="Phosphoserine" evidence="39 40">
    <location>
        <position position="8223"/>
    </location>
</feature>
<feature type="modified residue" description="Phosphothreonine" evidence="39">
    <location>
        <position position="8274"/>
    </location>
</feature>
<feature type="modified residue" description="Phosphoserine" evidence="39">
    <location>
        <position position="8277"/>
    </location>
</feature>
<feature type="modified residue" description="Phosphoserine" evidence="39">
    <location>
        <position position="8280"/>
    </location>
</feature>
<feature type="modified residue" description="Phosphoserine" evidence="1">
    <location>
        <position position="8305"/>
    </location>
</feature>
<feature type="modified residue" description="Phosphothreonine" evidence="40">
    <location>
        <position position="8360"/>
    </location>
</feature>
<feature type="disulfide bond" description="Interchain (C-563 in SUN2); alternate" evidence="2">
    <location>
        <position position="8774"/>
    </location>
</feature>
<feature type="disulfide bond" description="Interchain (with C-657 in SUN1); alternate" evidence="2">
    <location>
        <position position="8774"/>
    </location>
</feature>
<feature type="splice variant" id="VSP_007133" description="In isoform 9." evidence="36">
    <location>
        <begin position="1"/>
        <end position="7843"/>
    </location>
</feature>
<feature type="splice variant" id="VSP_007132" description="In isoform 3." evidence="30">
    <location>
        <begin position="1"/>
        <end position="7838"/>
    </location>
</feature>
<feature type="splice variant" id="VSP_057476" description="In isoform 11." evidence="31">
    <location>
        <begin position="1"/>
        <end position="7658"/>
    </location>
</feature>
<feature type="splice variant" id="VSP_007131" description="In isoform 8." evidence="36">
    <location>
        <begin position="1"/>
        <end position="5585"/>
    </location>
</feature>
<feature type="splice variant" id="VSP_007130" description="In isoform 2." evidence="30">
    <location>
        <begin position="1"/>
        <end position="5476"/>
    </location>
</feature>
<feature type="splice variant" id="VSP_057477" description="In isoform GSRP-56." evidence="33">
    <location>
        <begin position="1"/>
        <end position="2918"/>
    </location>
</feature>
<feature type="splice variant" id="VSP_007134" description="In isoform 4." evidence="32">
    <original>K</original>
    <variation>KSMHRGSP</variation>
    <location>
        <position position="103"/>
    </location>
</feature>
<feature type="splice variant" id="VSP_057478" description="In isoform 10." evidence="35">
    <location>
        <begin position="297"/>
        <end position="313"/>
    </location>
</feature>
<feature type="splice variant" id="VSP_007135" description="In isoform 5." evidence="29">
    <original>DIKTMEM</original>
    <variation>EYVIDKS</variation>
    <location>
        <begin position="1437"/>
        <end position="1443"/>
    </location>
</feature>
<feature type="splice variant" id="VSP_007136" description="In isoform 5." evidence="29">
    <location>
        <begin position="1444"/>
        <end position="8797"/>
    </location>
</feature>
<feature type="splice variant" id="VSP_007137" description="In isoform 6." evidence="34">
    <original>LQNEVVSQASFYSKLLQLKESLFS</original>
    <variation>SSRKCEEGKNKMLFVTVTLFKIIK</variation>
    <location>
        <begin position="1702"/>
        <end position="1725"/>
    </location>
</feature>
<feature type="splice variant" id="VSP_007138" description="In isoform 6." evidence="34">
    <location>
        <begin position="1726"/>
        <end position="8797"/>
    </location>
</feature>
<feature type="splice variant" id="VSP_057479" description="In isoform 10." evidence="35">
    <original>C</original>
    <variation>W</variation>
    <location>
        <position position="3049"/>
    </location>
</feature>
<feature type="splice variant" id="VSP_057480" description="In isoform 10." evidence="35">
    <location>
        <begin position="3050"/>
        <end position="8797"/>
    </location>
</feature>
<feature type="splice variant" id="VSP_057481" description="In isoform GSRP-56." evidence="33">
    <original>ALLSVKQEKEIQMKMIVTRGESVLQNTSPEGIPTIQQQLQSVKDMWASLLSAGIRCKSQLEGALSKWTSY</original>
    <variation>VCIFTQKYLQPTEFVFLKISRLHPPGVMMSHSLHDKSQMLCECNAVCLGCTCQRIPESSDPGCFPKNKIK</variation>
    <location>
        <begin position="3325"/>
        <end position="3394"/>
    </location>
</feature>
<feature type="splice variant" id="VSP_057482" description="In isoform GSRP-56." evidence="33">
    <location>
        <begin position="3395"/>
        <end position="8797"/>
    </location>
</feature>
<feature type="splice variant" id="VSP_007139" description="In isoform 4." evidence="32">
    <location>
        <begin position="3620"/>
        <end position="3641"/>
    </location>
</feature>
<feature type="splice variant" id="VSP_007140" description="In isoform 4." evidence="32">
    <location>
        <begin position="3912"/>
        <end position="3967"/>
    </location>
</feature>
<feature type="splice variant" id="VSP_007141" description="In isoform 7." evidence="28">
    <original>TLLEESKEID</original>
    <variation>VTLGKIIFKK</variation>
    <location>
        <begin position="5571"/>
        <end position="5580"/>
    </location>
</feature>
<feature type="splice variant" id="VSP_007142" description="In isoform 7." evidence="28">
    <location>
        <begin position="5581"/>
        <end position="8797"/>
    </location>
</feature>
<feature type="splice variant" id="VSP_007143" description="In isoform 9." evidence="36">
    <original>AKASHESKASEIEYKLGKVNDRWQHLLDLIA</original>
    <variation>MVVAEDLSALRMAEDGCVDADLPDCNCDVTR</variation>
    <location>
        <begin position="7844"/>
        <end position="7874"/>
    </location>
</feature>
<feature type="splice variant" id="VSP_007144" description="In isoform 3, isoform 4 and isoform 9." evidence="30 32 36">
    <original>S</original>
    <variation>SDVMIPESPEAYVKLTENAIKNTS</variation>
    <location>
        <position position="8325"/>
    </location>
</feature>
<feature type="sequence variant" id="VAR_056211" description="Found in a patient with mild intellectual disability, spastic paraplegia, axon neuropathy and leukoencephalopathy; uncertain significance; dbSNP:rs9397509." evidence="21">
    <original>Q</original>
    <variation>R</variation>
    <location>
        <position position="655"/>
    </location>
</feature>
<feature type="sequence variant" id="VAR_056212" description="In dbSNP:rs17082709.">
    <original>L</original>
    <variation>V</variation>
    <location>
        <position position="885"/>
    </location>
</feature>
<feature type="sequence variant" id="VAR_056213" description="In dbSNP:rs214976.">
    <original>V</original>
    <variation>A</variation>
    <location>
        <position position="1035"/>
    </location>
</feature>
<feature type="sequence variant" id="VAR_074190" evidence="23">
    <original>R</original>
    <variation>S</variation>
    <location>
        <position position="1062"/>
    </location>
</feature>
<feature type="sequence variant" id="VAR_056214" description="In dbSNP:rs35763277.">
    <original>S</original>
    <variation>G</variation>
    <location>
        <position position="2030"/>
    </location>
</feature>
<feature type="sequence variant" id="VAR_056215" description="In dbSNP:rs214950.">
    <original>A</original>
    <variation>V</variation>
    <location>
        <position position="2795"/>
    </location>
</feature>
<feature type="sequence variant" id="VAR_070561" description="Found in a patient with mild intellectual disability, spastic paraplegia, axon neuropathy and leukoencephalopathy; uncertain significance; dbSNP:rs398123005." evidence="21">
    <original>A</original>
    <variation>T</variation>
    <location>
        <position position="3088"/>
    </location>
</feature>
<feature type="sequence variant" id="VAR_036250" description="In a colorectal cancer sample; somatic mutation; dbSNP:rs567753957." evidence="14">
    <original>V</original>
    <variation>M</variation>
    <location>
        <position position="3671"/>
    </location>
</feature>
<feature type="sequence variant" id="VAR_056216" description="In dbSNP:rs13210127.">
    <original>K</original>
    <variation>T</variation>
    <location>
        <position position="3874"/>
    </location>
</feature>
<feature type="sequence variant" id="VAR_070562" description="Found in a patient with mild intellectual disability, spastic paraplegia, axon neuropathy and leukoencephalopathy; uncertain significance; dbSNP:rs180727534." evidence="21">
    <original>L</original>
    <variation>S</variation>
    <location>
        <position position="3892"/>
    </location>
</feature>
<feature type="sequence variant" id="VAR_056217" description="In dbSNP:rs7775119.">
    <original>S</original>
    <variation>T</variation>
    <location>
        <position position="3954"/>
    </location>
</feature>
<feature type="sequence variant" id="VAR_056218" description="In dbSNP:rs4645434.">
    <original>E</original>
    <variation>D</variation>
    <location>
        <position position="4060"/>
    </location>
</feature>
<feature type="sequence variant" id="VAR_056219" description="In dbSNP:rs28385621.">
    <original>K</original>
    <variation>N</variation>
    <location>
        <position position="4121"/>
    </location>
</feature>
<feature type="sequence variant" id="VAR_056220" description="In dbSNP:rs9479297.">
    <original>K</original>
    <variation>R</variation>
    <location>
        <position position="4121"/>
    </location>
</feature>
<feature type="sequence variant" id="VAR_056221" description="In dbSNP:rs2130262.">
    <original>E</original>
    <variation>K</variation>
    <location>
        <position position="4203"/>
    </location>
</feature>
<feature type="sequence variant" id="VAR_036251" description="In a colorectal cancer sample; somatic mutation." evidence="14">
    <original>E</original>
    <variation>D</variation>
    <location>
        <position position="4210"/>
    </location>
</feature>
<feature type="sequence variant" id="VAR_036252" description="In a colorectal cancer sample; somatic mutation; dbSNP:rs140492158." evidence="14">
    <original>R</original>
    <variation>H</variation>
    <location>
        <position position="4223"/>
    </location>
</feature>
<feature type="sequence variant" id="VAR_056222" description="In dbSNP:rs4870093.">
    <original>V</original>
    <variation>I</variation>
    <location>
        <position position="4546"/>
    </location>
</feature>
<feature type="sequence variant" id="VAR_056223" description="In dbSNP:rs6911096." evidence="7 11">
    <original>S</original>
    <variation>T</variation>
    <location>
        <position position="4596"/>
    </location>
</feature>
<feature type="sequence variant" id="VAR_056224" description="In dbSNP:rs2306916.">
    <original>L</original>
    <variation>M</variation>
    <location>
        <position position="4944"/>
    </location>
</feature>
<feature type="sequence variant" id="VAR_056225" description="In dbSNP:rs2306916." evidence="7 11">
    <original>L</original>
    <variation>M</variation>
    <location>
        <position position="5015"/>
    </location>
</feature>
<feature type="sequence variant" id="VAR_056226" description="In dbSNP:rs35987150.">
    <original>M</original>
    <variation>L</variation>
    <location>
        <position position="5377"/>
    </location>
</feature>
<feature type="sequence variant" id="VAR_056227" description="In dbSNP:rs2306914.">
    <original>T</original>
    <variation>M</variation>
    <location>
        <position position="5426"/>
    </location>
</feature>
<feature type="sequence variant" id="VAR_036253" description="In a colorectal cancer sample; somatic mutation; dbSNP:rs2095782134." evidence="14">
    <original>L</original>
    <variation>R</variation>
    <location>
        <position position="5507"/>
    </location>
</feature>
<feature type="sequence variant" id="VAR_056228" description="In dbSNP:rs35654757.">
    <original>M</original>
    <variation>I</variation>
    <location>
        <position position="6566"/>
    </location>
</feature>
<feature type="sequence variant" id="VAR_056229" description="In dbSNP:rs35079654.">
    <original>T</original>
    <variation>I</variation>
    <location>
        <position position="6664"/>
    </location>
</feature>
<feature type="sequence variant" id="VAR_056230" description="In dbSNP:rs3945783.">
    <original>Q</original>
    <variation>H</variation>
    <location>
        <position position="6951"/>
    </location>
</feature>
<feature type="sequence variant" id="VAR_056231" description="In dbSNP:rs2147377." evidence="8 11 26 27">
    <original>F</original>
    <variation>V</variation>
    <location>
        <position position="7302"/>
    </location>
</feature>
<feature type="sequence variant" id="VAR_056232" description="In dbSNP:rs35763277.">
    <original>S</original>
    <variation>G</variation>
    <location>
        <position position="7506"/>
    </location>
</feature>
<feature type="sequence variant" id="VAR_062974" description="In EDMD4; dbSNP:rs119103246." evidence="16">
    <original>R</original>
    <variation>H</variation>
    <location>
        <position position="8095"/>
    </location>
</feature>
<feature type="sequence variant" id="VAR_056233" description="In dbSNP:rs36215251.">
    <original>N</original>
    <variation>H</variation>
    <location>
        <position position="8161"/>
    </location>
</feature>
<feature type="sequence variant" id="VAR_056234" description="In dbSNP:rs17082236.">
    <original>A</original>
    <variation>S</variation>
    <location>
        <position position="8168"/>
    </location>
</feature>
<feature type="sequence variant" id="VAR_082986" description="In AMC3." evidence="22">
    <location>
        <begin position="8193"/>
        <end position="8797"/>
    </location>
</feature>
<feature type="sequence variant" id="VAR_015548" description="In dbSNP:rs2252755." evidence="8 9 11 26 27">
    <original>G</original>
    <variation>A</variation>
    <location>
        <position position="8323"/>
    </location>
</feature>
<feature type="sequence variant" id="VAR_062975" description="In EDMD4; uncertain significance; dbSNP:rs119103247." evidence="16">
    <original>V</original>
    <variation>L</variation>
    <location>
        <position position="8387"/>
    </location>
</feature>
<feature type="sequence variant" id="VAR_062976" description="In EDMD4; dbSNP:rs119103248." evidence="16">
    <original>E</original>
    <variation>K</variation>
    <location>
        <position position="8461"/>
    </location>
</feature>
<feature type="sequence variant" id="VAR_036254" description="In a colorectal cancer sample; somatic mutation; dbSNP:rs143049227." evidence="14">
    <original>R</original>
    <variation>H</variation>
    <location>
        <position position="8468"/>
    </location>
</feature>
<feature type="sequence variant" id="VAR_056235" description="In dbSNP:rs35591210.">
    <original>T</original>
    <variation>I</variation>
    <location>
        <position position="8687"/>
    </location>
</feature>
<feature type="sequence variant" id="VAR_056236" description="In dbSNP:rs2295190.">
    <original>L</original>
    <variation>M</variation>
    <location>
        <position position="8741"/>
    </location>
</feature>
<feature type="sequence variant" id="VAR_082987" description="In AMC3." evidence="24">
    <location>
        <begin position="8746"/>
        <end position="8797"/>
    </location>
</feature>
<feature type="mutagenesis site" description="Abolishes the nuclear envelope targeting, induces a cytoplasmic localization." evidence="8">
    <location>
        <begin position="8758"/>
        <end position="8763"/>
    </location>
</feature>
<feature type="sequence conflict" description="In Ref. 2; AAN60442." evidence="37" ref="2">
    <original>F</original>
    <variation>L</variation>
    <location>
        <position position="98"/>
    </location>
</feature>
<feature type="sequence conflict" description="In Ref. 9; AAM95335." evidence="37" ref="9">
    <original>S</original>
    <variation>P</variation>
    <location>
        <position position="494"/>
    </location>
</feature>
<feature type="sequence conflict" description="In Ref. 12; CAD28486." evidence="37" ref="12">
    <original>T</original>
    <variation>P</variation>
    <location>
        <position position="1440"/>
    </location>
</feature>
<feature type="sequence conflict" description="In Ref. 10; BAB71097." evidence="37" ref="10">
    <original>N</original>
    <variation>D</variation>
    <location>
        <position position="3096"/>
    </location>
</feature>
<feature type="sequence conflict" description="In Ref. 1; AAL33798." evidence="37" ref="1">
    <original>A</original>
    <variation>T</variation>
    <location>
        <position position="5526"/>
    </location>
</feature>
<feature type="sequence conflict" description="In Ref. 1; AAL33798." evidence="37" ref="1">
    <original>E</original>
    <variation>K</variation>
    <location>
        <position position="5564"/>
    </location>
</feature>
<feature type="sequence conflict" description="In Ref. 5; AAN03486." evidence="37" ref="5">
    <original>E</original>
    <variation>A</variation>
    <location>
        <position position="5735"/>
    </location>
</feature>
<feature type="sequence conflict" description="In Ref. 1; AAL33798, 2; AAN60442 and 6; AAO27774." evidence="37" ref="1 2 6">
    <original>K</original>
    <variation>E</variation>
    <location>
        <position position="6549"/>
    </location>
</feature>
<feature type="sequence conflict" description="In Ref. 1; AAL33798, 2; AAN60442 and 6; AAO27774." evidence="37" ref="1 2 6">
    <original>L</original>
    <variation>P</variation>
    <location>
        <position position="6626"/>
    </location>
</feature>
<feature type="sequence conflict" description="In Ref. 1; AAL33798, 2; AAN60442 and 6; AAO27774." evidence="37" ref="1 2 6">
    <original>E</original>
    <variation>V</variation>
    <location>
        <position position="6645"/>
    </location>
</feature>
<feature type="sequence conflict" description="In Ref. 1; AAL33798, 2; AAN60442 and 6; AAO27774." evidence="37" ref="1 2 6">
    <original>I</original>
    <variation>T</variation>
    <location>
        <position position="6923"/>
    </location>
</feature>
<feature type="sequence conflict" description="In Ref. 1; AAL33798, 2; AAN60442 and 6; AAO27774." evidence="37" ref="1 2 6">
    <original>V</original>
    <variation>A</variation>
    <location>
        <position position="6929"/>
    </location>
</feature>
<feature type="sequence conflict" description="In Ref. 1; AAL33798, 2; AAN60442 and 6; AAO27774." evidence="37" ref="1 2 6">
    <original>E</original>
    <variation>D</variation>
    <location>
        <position position="7075"/>
    </location>
</feature>
<feature type="sequence conflict" description="In Ref. 1; AAL33798, 2; AAN60442 and 6; AAO27774." evidence="37" ref="1 2 6">
    <original>N</original>
    <variation>T</variation>
    <location>
        <position position="7091"/>
    </location>
</feature>
<feature type="helix" evidence="42">
    <location>
        <begin position="8770"/>
        <end position="8776"/>
    </location>
</feature>
<feature type="helix" evidence="42">
    <location>
        <begin position="8779"/>
        <end position="8782"/>
    </location>
</feature>
<feature type="strand" evidence="42">
    <location>
        <begin position="8783"/>
        <end position="8785"/>
    </location>
</feature>
<feature type="strand" evidence="41">
    <location>
        <begin position="8787"/>
        <end position="8793"/>
    </location>
</feature>
<reference key="1">
    <citation type="journal article" date="2001" name="J. Cell Sci.">
        <title>Nesprins: a novel family of spectrin-repeat-containing proteins that localize to the nuclear membrane in multiple tissues.</title>
        <authorList>
            <person name="Zhang Q."/>
            <person name="Skepper J.N."/>
            <person name="Yang F."/>
            <person name="Davies J.D."/>
            <person name="Hegyi L."/>
            <person name="Roberts R.G."/>
            <person name="Weissberg P.L."/>
            <person name="Ellis J.A."/>
            <person name="Shanahan C.M."/>
        </authorList>
    </citation>
    <scope>NUCLEOTIDE SEQUENCE [MRNA] (ISOFORMS 2 AND 3)</scope>
    <scope>FUNCTION</scope>
    <scope>SUBCELLULAR LOCATION</scope>
    <scope>TISSUE SPECIFICITY</scope>
    <scope>MUTAGENESIS OF 8758-LEU--CYS-8763</scope>
    <scope>VARIANTS VAL-7302 AND ALA-8323</scope>
    <source>
        <tissue>Heart</tissue>
        <tissue>Placenta</tissue>
        <tissue>Skeletal muscle</tissue>
        <tissue>Spleen</tissue>
        <tissue>Testis</tissue>
    </source>
</reference>
<reference key="2">
    <citation type="journal article" date="2002" name="Genomics">
        <title>The nesprins are giant actin-binding proteins, orthologous to Drosophila melanogaster muscle protein MSP-300.</title>
        <authorList>
            <person name="Zhang Q."/>
            <person name="Ragnauth C."/>
            <person name="Greener M.J."/>
            <person name="Shanahan C.M."/>
            <person name="Roberts R.G."/>
        </authorList>
    </citation>
    <scope>NUCLEOTIDE SEQUENCE [MRNA] (ISOFORM 1)</scope>
    <scope>SUBCELLULAR LOCATION</scope>
    <scope>VARIANTS THR-4596; MET-5015; VAL-7302 AND ALA-8323</scope>
    <source>
        <tissue>Heart</tissue>
        <tissue>Spleen</tissue>
        <tissue>Testis</tissue>
    </source>
</reference>
<reference key="3">
    <citation type="journal article" date="2002" name="J. Cell Sci.">
        <title>Myne-1, a spectrin repeat transmembrane protein of the myocyte inner nuclear membrane, interacts with lamin A/C.</title>
        <authorList>
            <person name="Mislow J.M.K."/>
            <person name="Kim M.S."/>
            <person name="Davis D.B."/>
            <person name="McNally E.M."/>
        </authorList>
    </citation>
    <scope>NUCLEOTIDE SEQUENCE [MRNA] (ISOFORM 11)</scope>
    <scope>SUBCELLULAR LOCATION</scope>
    <scope>TISSUE SPECIFICITY</scope>
    <scope>VARIANT ALA-8323</scope>
</reference>
<reference key="4">
    <citation type="journal article" date="2008" name="Int. J. Cancer">
        <title>Loss of Drop1 expression already at early tumor stages in a wide range of human carcinomas.</title>
        <authorList>
            <person name="Marme A."/>
            <person name="Zimmermann H.P."/>
            <person name="Moldenhauer G."/>
            <person name="Schorpp-Kistner M."/>
            <person name="Muller C."/>
            <person name="Keberlein O."/>
            <person name="Giersch A."/>
            <person name="Kretschmer J."/>
            <person name="Seib B."/>
            <person name="Spiess E."/>
            <person name="Hunziker A."/>
            <person name="Merchan F."/>
            <person name="Moller P."/>
            <person name="Hahn U."/>
            <person name="Kurek R."/>
            <person name="Marme F."/>
            <person name="Bastert G."/>
            <person name="Wallwiener D."/>
            <person name="Ponstingl H."/>
        </authorList>
    </citation>
    <scope>NUCLEOTIDE SEQUENCE [MRNA] (ISOFORM 10)</scope>
    <source>
        <tissue>Ovary</tissue>
    </source>
</reference>
<reference key="5">
    <citation type="journal article" date="2004" name="Exp. Cell Res.">
        <title>Enaptin, a giant actin-binding protein, is an element of the nuclear membrane and the actin cytoskeleton.</title>
        <authorList>
            <person name="Padmakumar V.C."/>
            <person name="Abraham S."/>
            <person name="Braune S."/>
            <person name="Noegel A.A."/>
            <person name="Tunggal B."/>
            <person name="Karakesisoglou I."/>
            <person name="Korenbaum E."/>
        </authorList>
    </citation>
    <scope>NUCLEOTIDE SEQUENCE [MRNA] (ISOFORM 4)</scope>
    <scope>TISSUE SPECIFICITY</scope>
    <source>
        <tissue>Cerebellum</tissue>
    </source>
</reference>
<reference key="6">
    <citation type="submission" date="2002-11" db="EMBL/GenBank/DDBJ databases">
        <authorList>
            <person name="Zhang Q."/>
            <person name="Shanahan C.M."/>
        </authorList>
    </citation>
    <scope>NUCLEOTIDE SEQUENCE [MRNA] (ISOFORMS 8 AND 9)</scope>
    <scope>VARIANTS VAL-7302 AND ALA-8323</scope>
</reference>
<reference key="7">
    <citation type="journal article" date="2004" name="Genome Res.">
        <title>The status, quality, and expansion of the NIH full-length cDNA project: the Mammalian Gene Collection (MGC).</title>
        <authorList>
            <consortium name="The MGC Project Team"/>
        </authorList>
    </citation>
    <scope>NUCLEOTIDE SEQUENCE [LARGE SCALE MRNA] (ISOFORM GSRP-56)</scope>
    <source>
        <tissue>Testis</tissue>
    </source>
</reference>
<reference key="8">
    <citation type="journal article" date="2003" name="Nature">
        <title>The DNA sequence and analysis of human chromosome 6.</title>
        <authorList>
            <person name="Mungall A.J."/>
            <person name="Palmer S.A."/>
            <person name="Sims S.K."/>
            <person name="Edwards C.A."/>
            <person name="Ashurst J.L."/>
            <person name="Wilming L."/>
            <person name="Jones M.C."/>
            <person name="Horton R."/>
            <person name="Hunt S.E."/>
            <person name="Scott C.E."/>
            <person name="Gilbert J.G.R."/>
            <person name="Clamp M.E."/>
            <person name="Bethel G."/>
            <person name="Milne S."/>
            <person name="Ainscough R."/>
            <person name="Almeida J.P."/>
            <person name="Ambrose K.D."/>
            <person name="Andrews T.D."/>
            <person name="Ashwell R.I.S."/>
            <person name="Babbage A.K."/>
            <person name="Bagguley C.L."/>
            <person name="Bailey J."/>
            <person name="Banerjee R."/>
            <person name="Barker D.J."/>
            <person name="Barlow K.F."/>
            <person name="Bates K."/>
            <person name="Beare D.M."/>
            <person name="Beasley H."/>
            <person name="Beasley O."/>
            <person name="Bird C.P."/>
            <person name="Blakey S.E."/>
            <person name="Bray-Allen S."/>
            <person name="Brook J."/>
            <person name="Brown A.J."/>
            <person name="Brown J.Y."/>
            <person name="Burford D.C."/>
            <person name="Burrill W."/>
            <person name="Burton J."/>
            <person name="Carder C."/>
            <person name="Carter N.P."/>
            <person name="Chapman J.C."/>
            <person name="Clark S.Y."/>
            <person name="Clark G."/>
            <person name="Clee C.M."/>
            <person name="Clegg S."/>
            <person name="Cobley V."/>
            <person name="Collier R.E."/>
            <person name="Collins J.E."/>
            <person name="Colman L.K."/>
            <person name="Corby N.R."/>
            <person name="Coville G.J."/>
            <person name="Culley K.M."/>
            <person name="Dhami P."/>
            <person name="Davies J."/>
            <person name="Dunn M."/>
            <person name="Earthrowl M.E."/>
            <person name="Ellington A.E."/>
            <person name="Evans K.A."/>
            <person name="Faulkner L."/>
            <person name="Francis M.D."/>
            <person name="Frankish A."/>
            <person name="Frankland J."/>
            <person name="French L."/>
            <person name="Garner P."/>
            <person name="Garnett J."/>
            <person name="Ghori M.J."/>
            <person name="Gilby L.M."/>
            <person name="Gillson C.J."/>
            <person name="Glithero R.J."/>
            <person name="Grafham D.V."/>
            <person name="Grant M."/>
            <person name="Gribble S."/>
            <person name="Griffiths C."/>
            <person name="Griffiths M.N.D."/>
            <person name="Hall R."/>
            <person name="Halls K.S."/>
            <person name="Hammond S."/>
            <person name="Harley J.L."/>
            <person name="Hart E.A."/>
            <person name="Heath P.D."/>
            <person name="Heathcott R."/>
            <person name="Holmes S.J."/>
            <person name="Howden P.J."/>
            <person name="Howe K.L."/>
            <person name="Howell G.R."/>
            <person name="Huckle E."/>
            <person name="Humphray S.J."/>
            <person name="Humphries M.D."/>
            <person name="Hunt A.R."/>
            <person name="Johnson C.M."/>
            <person name="Joy A.A."/>
            <person name="Kay M."/>
            <person name="Keenan S.J."/>
            <person name="Kimberley A.M."/>
            <person name="King A."/>
            <person name="Laird G.K."/>
            <person name="Langford C."/>
            <person name="Lawlor S."/>
            <person name="Leongamornlert D.A."/>
            <person name="Leversha M."/>
            <person name="Lloyd C.R."/>
            <person name="Lloyd D.M."/>
            <person name="Loveland J.E."/>
            <person name="Lovell J."/>
            <person name="Martin S."/>
            <person name="Mashreghi-Mohammadi M."/>
            <person name="Maslen G.L."/>
            <person name="Matthews L."/>
            <person name="McCann O.T."/>
            <person name="McLaren S.J."/>
            <person name="McLay K."/>
            <person name="McMurray A."/>
            <person name="Moore M.J.F."/>
            <person name="Mullikin J.C."/>
            <person name="Niblett D."/>
            <person name="Nickerson T."/>
            <person name="Novik K.L."/>
            <person name="Oliver K."/>
            <person name="Overton-Larty E.K."/>
            <person name="Parker A."/>
            <person name="Patel R."/>
            <person name="Pearce A.V."/>
            <person name="Peck A.I."/>
            <person name="Phillimore B.J.C.T."/>
            <person name="Phillips S."/>
            <person name="Plumb R.W."/>
            <person name="Porter K.M."/>
            <person name="Ramsey Y."/>
            <person name="Ranby S.A."/>
            <person name="Rice C.M."/>
            <person name="Ross M.T."/>
            <person name="Searle S.M."/>
            <person name="Sehra H.K."/>
            <person name="Sheridan E."/>
            <person name="Skuce C.D."/>
            <person name="Smith S."/>
            <person name="Smith M."/>
            <person name="Spraggon L."/>
            <person name="Squares S.L."/>
            <person name="Steward C.A."/>
            <person name="Sycamore N."/>
            <person name="Tamlyn-Hall G."/>
            <person name="Tester J."/>
            <person name="Theaker A.J."/>
            <person name="Thomas D.W."/>
            <person name="Thorpe A."/>
            <person name="Tracey A."/>
            <person name="Tromans A."/>
            <person name="Tubby B."/>
            <person name="Wall M."/>
            <person name="Wallis J.M."/>
            <person name="West A.P."/>
            <person name="White S.S."/>
            <person name="Whitehead S.L."/>
            <person name="Whittaker H."/>
            <person name="Wild A."/>
            <person name="Willey D.J."/>
            <person name="Wilmer T.E."/>
            <person name="Wood J.M."/>
            <person name="Wray P.W."/>
            <person name="Wyatt J.C."/>
            <person name="Young L."/>
            <person name="Younger R.M."/>
            <person name="Bentley D.R."/>
            <person name="Coulson A."/>
            <person name="Durbin R.M."/>
            <person name="Hubbard T."/>
            <person name="Sulston J.E."/>
            <person name="Dunham I."/>
            <person name="Rogers J."/>
            <person name="Beck S."/>
        </authorList>
    </citation>
    <scope>NUCLEOTIDE SEQUENCE [LARGE SCALE GENOMIC DNA]</scope>
</reference>
<reference key="9">
    <citation type="journal article" date="2003" name="Mol. Biol. Cell">
        <title>Golgi localization of Syne-1.</title>
        <authorList>
            <person name="Gough L.L."/>
            <person name="Fan J."/>
            <person name="Chu S."/>
            <person name="Winnick S."/>
            <person name="Beck K.A."/>
        </authorList>
    </citation>
    <scope>NUCLEOTIDE SEQUENCE [MRNA] OF 1-856 (ISOFORM 1)</scope>
    <source>
        <tissue>Kidney</tissue>
    </source>
</reference>
<reference key="10">
    <citation type="journal article" date="2004" name="Nat. Genet.">
        <title>Complete sequencing and characterization of 21,243 full-length human cDNAs.</title>
        <authorList>
            <person name="Ota T."/>
            <person name="Suzuki Y."/>
            <person name="Nishikawa T."/>
            <person name="Otsuki T."/>
            <person name="Sugiyama T."/>
            <person name="Irie R."/>
            <person name="Wakamatsu A."/>
            <person name="Hayashi K."/>
            <person name="Sato H."/>
            <person name="Nagai K."/>
            <person name="Kimura K."/>
            <person name="Makita H."/>
            <person name="Sekine M."/>
            <person name="Obayashi M."/>
            <person name="Nishi T."/>
            <person name="Shibahara T."/>
            <person name="Tanaka T."/>
            <person name="Ishii S."/>
            <person name="Yamamoto J."/>
            <person name="Saito K."/>
            <person name="Kawai Y."/>
            <person name="Isono Y."/>
            <person name="Nakamura Y."/>
            <person name="Nagahari K."/>
            <person name="Murakami K."/>
            <person name="Yasuda T."/>
            <person name="Iwayanagi T."/>
            <person name="Wagatsuma M."/>
            <person name="Shiratori A."/>
            <person name="Sudo H."/>
            <person name="Hosoiri T."/>
            <person name="Kaku Y."/>
            <person name="Kodaira H."/>
            <person name="Kondo H."/>
            <person name="Sugawara M."/>
            <person name="Takahashi M."/>
            <person name="Kanda K."/>
            <person name="Yokoi T."/>
            <person name="Furuya T."/>
            <person name="Kikkawa E."/>
            <person name="Omura Y."/>
            <person name="Abe K."/>
            <person name="Kamihara K."/>
            <person name="Katsuta N."/>
            <person name="Sato K."/>
            <person name="Tanikawa M."/>
            <person name="Yamazaki M."/>
            <person name="Ninomiya K."/>
            <person name="Ishibashi T."/>
            <person name="Yamashita H."/>
            <person name="Murakawa K."/>
            <person name="Fujimori K."/>
            <person name="Tanai H."/>
            <person name="Kimata M."/>
            <person name="Watanabe M."/>
            <person name="Hiraoka S."/>
            <person name="Chiba Y."/>
            <person name="Ishida S."/>
            <person name="Ono Y."/>
            <person name="Takiguchi S."/>
            <person name="Watanabe S."/>
            <person name="Yosida M."/>
            <person name="Hotuta T."/>
            <person name="Kusano J."/>
            <person name="Kanehori K."/>
            <person name="Takahashi-Fujii A."/>
            <person name="Hara H."/>
            <person name="Tanase T.-O."/>
            <person name="Nomura Y."/>
            <person name="Togiya S."/>
            <person name="Komai F."/>
            <person name="Hara R."/>
            <person name="Takeuchi K."/>
            <person name="Arita M."/>
            <person name="Imose N."/>
            <person name="Musashino K."/>
            <person name="Yuuki H."/>
            <person name="Oshima A."/>
            <person name="Sasaki N."/>
            <person name="Aotsuka S."/>
            <person name="Yoshikawa Y."/>
            <person name="Matsunawa H."/>
            <person name="Ichihara T."/>
            <person name="Shiohata N."/>
            <person name="Sano S."/>
            <person name="Moriya S."/>
            <person name="Momiyama H."/>
            <person name="Satoh N."/>
            <person name="Takami S."/>
            <person name="Terashima Y."/>
            <person name="Suzuki O."/>
            <person name="Nakagawa S."/>
            <person name="Senoh A."/>
            <person name="Mizoguchi H."/>
            <person name="Goto Y."/>
            <person name="Shimizu F."/>
            <person name="Wakebe H."/>
            <person name="Hishigaki H."/>
            <person name="Watanabe T."/>
            <person name="Sugiyama A."/>
            <person name="Takemoto M."/>
            <person name="Kawakami B."/>
            <person name="Yamazaki M."/>
            <person name="Watanabe K."/>
            <person name="Kumagai A."/>
            <person name="Itakura S."/>
            <person name="Fukuzumi Y."/>
            <person name="Fujimori Y."/>
            <person name="Komiyama M."/>
            <person name="Tashiro H."/>
            <person name="Tanigami A."/>
            <person name="Fujiwara T."/>
            <person name="Ono T."/>
            <person name="Yamada K."/>
            <person name="Fujii Y."/>
            <person name="Ozaki K."/>
            <person name="Hirao M."/>
            <person name="Ohmori Y."/>
            <person name="Kawabata A."/>
            <person name="Hikiji T."/>
            <person name="Kobatake N."/>
            <person name="Inagaki H."/>
            <person name="Ikema Y."/>
            <person name="Okamoto S."/>
            <person name="Okitani R."/>
            <person name="Kawakami T."/>
            <person name="Noguchi S."/>
            <person name="Itoh T."/>
            <person name="Shigeta K."/>
            <person name="Senba T."/>
            <person name="Matsumura K."/>
            <person name="Nakajima Y."/>
            <person name="Mizuno T."/>
            <person name="Morinaga M."/>
            <person name="Sasaki M."/>
            <person name="Togashi T."/>
            <person name="Oyama M."/>
            <person name="Hata H."/>
            <person name="Watanabe M."/>
            <person name="Komatsu T."/>
            <person name="Mizushima-Sugano J."/>
            <person name="Satoh T."/>
            <person name="Shirai Y."/>
            <person name="Takahashi Y."/>
            <person name="Nakagawa K."/>
            <person name="Okumura K."/>
            <person name="Nagase T."/>
            <person name="Nomura N."/>
            <person name="Kikuchi H."/>
            <person name="Masuho Y."/>
            <person name="Yamashita R."/>
            <person name="Nakai K."/>
            <person name="Yada T."/>
            <person name="Nakamura Y."/>
            <person name="Ohara O."/>
            <person name="Isogai T."/>
            <person name="Sugano S."/>
        </authorList>
    </citation>
    <scope>NUCLEOTIDE SEQUENCE [LARGE SCALE MRNA] OF 28-778 AND 2901-3476 (ISOFORM 1)</scope>
    <source>
        <tissue>Adrenal gland</tissue>
        <tissue>Teratocarcinoma</tissue>
    </source>
</reference>
<reference key="11">
    <citation type="journal article" date="2000" name="DNA Res.">
        <title>Prediction of the coding sequences of unidentified human genes. XIX. The complete sequences of 100 new cDNA clones from brain which code for large proteins in vitro.</title>
        <authorList>
            <person name="Nagase T."/>
            <person name="Kikuno R."/>
            <person name="Hattori A."/>
            <person name="Kondo Y."/>
            <person name="Okumura K."/>
            <person name="Ohara O."/>
        </authorList>
    </citation>
    <scope>NUCLEOTIDE SEQUENCE [LARGE SCALE MRNA] OF 443-8797 (ISOFORM 5)</scope>
    <source>
        <tissue>Brain</tissue>
    </source>
</reference>
<reference key="12">
    <citation type="journal article" date="2007" name="BMC Genomics">
        <title>The full-ORF clone resource of the German cDNA consortium.</title>
        <authorList>
            <person name="Bechtel S."/>
            <person name="Rosenfelder H."/>
            <person name="Duda A."/>
            <person name="Schmidt C.P."/>
            <person name="Ernst U."/>
            <person name="Wellenreuther R."/>
            <person name="Mehrle A."/>
            <person name="Schuster C."/>
            <person name="Bahr A."/>
            <person name="Bloecker H."/>
            <person name="Heubner D."/>
            <person name="Hoerlein A."/>
            <person name="Michel G."/>
            <person name="Wedler H."/>
            <person name="Koehrer K."/>
            <person name="Ottenwaelder B."/>
            <person name="Poustka A."/>
            <person name="Wiemann S."/>
            <person name="Schupp I."/>
        </authorList>
    </citation>
    <scope>NUCLEOTIDE SEQUENCE [LARGE SCALE MRNA] OF 743-8797 (ISOFORM 6)</scope>
    <source>
        <tissue>Brain</tissue>
    </source>
</reference>
<reference key="13">
    <citation type="journal article" date="1999" name="DNA Res.">
        <title>Prediction of the coding sequences of unidentified human genes. XV. The complete sequences of 100 new cDNA clones from brain which code for large proteins in vitro.</title>
        <authorList>
            <person name="Nagase T."/>
            <person name="Ishikawa K."/>
            <person name="Kikuno R."/>
            <person name="Hirosawa M."/>
            <person name="Nomura N."/>
            <person name="Ohara O."/>
        </authorList>
    </citation>
    <scope>NUCLEOTIDE SEQUENCE [LARGE SCALE MRNA] OF 4219-8797 (ISOFORM 7)</scope>
    <scope>VARIANTS THR-4596 AND MET-5015</scope>
    <source>
        <tissue>Brain</tissue>
    </source>
</reference>
<reference key="14">
    <citation type="journal article" date="1998" name="DNA Res.">
        <title>Prediction of the coding sequences of unidentified human genes. XI. The complete sequences of 100 new cDNA clones from brain which code for large proteins in vitro.</title>
        <authorList>
            <person name="Nagase T."/>
            <person name="Ishikawa K."/>
            <person name="Suyama M."/>
            <person name="Kikuno R."/>
            <person name="Miyajima N."/>
            <person name="Tanaka A."/>
            <person name="Kotani H."/>
            <person name="Nomura N."/>
            <person name="Ohara O."/>
        </authorList>
    </citation>
    <scope>NUCLEOTIDE SEQUENCE [LARGE SCALE MRNA] OF 6922-8797 (ISOFORM 1)</scope>
    <scope>VARIANTS VAL-7302 AND ALA-8323</scope>
    <source>
        <tissue>Brain</tissue>
    </source>
</reference>
<reference key="15">
    <citation type="journal article" date="2002" name="DNA Res.">
        <title>Construction of expression-ready cDNA clones for KIAA genes: manual curation of 330 KIAA cDNA clones.</title>
        <authorList>
            <person name="Nakajima D."/>
            <person name="Okazaki N."/>
            <person name="Yamakawa H."/>
            <person name="Kikuno R."/>
            <person name="Ohara O."/>
            <person name="Nagase T."/>
        </authorList>
    </citation>
    <scope>SEQUENCE REVISION</scope>
</reference>
<reference key="16">
    <citation type="submission" date="2008-12" db="EMBL/GenBank/DDBJ databases">
        <authorList>
            <person name="Ma F.-R."/>
            <person name="Zhu L.-P."/>
        </authorList>
    </citation>
    <scope>NUCLEOTIDE SEQUENCE [MRNA] OF 8406-8797 (ISOFORM 1)</scope>
</reference>
<reference key="17">
    <citation type="journal article" date="2002" name="FEBS Lett.">
        <title>Nesprin-1alpha self-associates and binds directly to emerin and lamin A in vitro.</title>
        <authorList>
            <person name="Mislow J.M."/>
            <person name="Holaska J.M."/>
            <person name="Kim M.S."/>
            <person name="Lee K.K."/>
            <person name="Segura-Totten M."/>
            <person name="Wilson K.L."/>
            <person name="McNally E.M."/>
        </authorList>
    </citation>
    <scope>SUBUNIT</scope>
    <scope>INTERACTION WITH EMD AND LMNA</scope>
</reference>
<reference key="18">
    <citation type="journal article" date="2006" name="Cell">
        <title>Global, in vivo, and site-specific phosphorylation dynamics in signaling networks.</title>
        <authorList>
            <person name="Olsen J.V."/>
            <person name="Blagoev B."/>
            <person name="Gnad F."/>
            <person name="Macek B."/>
            <person name="Kumar C."/>
            <person name="Mortensen P."/>
            <person name="Mann M."/>
        </authorList>
    </citation>
    <scope>PHOSPHORYLATION [LARGE SCALE ANALYSIS] AT SER-8223; THR-8274; SER-8277 AND SER-8280</scope>
    <scope>IDENTIFICATION BY MASS SPECTROMETRY [LARGE SCALE ANALYSIS]</scope>
    <source>
        <tissue>Cervix carcinoma</tissue>
    </source>
</reference>
<reference key="19">
    <citation type="journal article" date="2006" name="Exp. Cell Res.">
        <title>Identification and characterization of GSRP-56, a novel Golgi-localized spectrin repeat-containing protein.</title>
        <authorList>
            <person name="Kobayashi Y."/>
            <person name="Katanosaka Y."/>
            <person name="Iwata Y."/>
            <person name="Matsuoka M."/>
            <person name="Shigekawa M."/>
            <person name="Wakabayashi S."/>
        </authorList>
    </citation>
    <scope>ALTERNATIVE SPLICING (ISOFORM GSRP-56)</scope>
    <scope>SUBCELLULAR LOCATION (ISOFORM GSRP-56)</scope>
    <scope>INTERACTION WITH TRPV2 (ISOFORM GSRP-56)</scope>
    <scope>TISSUE SPECIFICITY (ISOFORM GSRP-56)</scope>
</reference>
<reference key="20">
    <citation type="journal article" date="2007" name="Nat. Genet.">
        <title>Mutations in SYNE1 lead to a newly discovered form of autosomal recessive cerebellar ataxia.</title>
        <authorList>
            <person name="Gros-Louis F."/>
            <person name="Dupre N."/>
            <person name="Dion P."/>
            <person name="Fox M.A."/>
            <person name="Laurent S."/>
            <person name="Verreault S."/>
            <person name="Sanes J.R."/>
            <person name="Bouchard J.-P."/>
            <person name="Rouleau G.A."/>
        </authorList>
    </citation>
    <scope>INVOLVEMENT IN SCAR8</scope>
</reference>
<reference key="21">
    <citation type="journal article" date="2008" name="Exp. Cell Res.">
        <title>Structural requirements for the assembly of LINC complexes and their function in cellular mechanical stiffness.</title>
        <authorList>
            <person name="Stewart-Hutchinson P.J."/>
            <person name="Hale C.M."/>
            <person name="Wirtz D."/>
            <person name="Hodzic D."/>
        </authorList>
    </citation>
    <scope>FUNCTION</scope>
    <scope>DOMAIN</scope>
    <scope>INTERACTION WITH SUN1 AND SUN2</scope>
</reference>
<reference key="22">
    <citation type="journal article" date="2009" name="Hum. Mol. Genet.">
        <title>Mutation of SYNE-1, encoding an essential component of the nuclear lamina, is responsible for autosomal recessive arthrogryposis.</title>
        <authorList>
            <person name="Attali R."/>
            <person name="Warwar N."/>
            <person name="Israel A."/>
            <person name="Gurt I."/>
            <person name="McNally E."/>
            <person name="Puckelwartz M."/>
            <person name="Glick B."/>
            <person name="Nevo Y."/>
            <person name="Ben-Neriah Z."/>
            <person name="Melki J."/>
        </authorList>
    </citation>
    <scope>INVOLVEMENT IN AMC3</scope>
</reference>
<reference key="23">
    <citation type="journal article" date="2009" name="Sci. Signal.">
        <title>Quantitative phosphoproteomic analysis of T cell receptor signaling reveals system-wide modulation of protein-protein interactions.</title>
        <authorList>
            <person name="Mayya V."/>
            <person name="Lundgren D.H."/>
            <person name="Hwang S.-I."/>
            <person name="Rezaul K."/>
            <person name="Wu L."/>
            <person name="Eng J.K."/>
            <person name="Rodionov V."/>
            <person name="Han D.K."/>
        </authorList>
    </citation>
    <scope>IDENTIFICATION BY MASS SPECTROMETRY [LARGE SCALE ANALYSIS]</scope>
    <source>
        <tissue>Leukemic T-cell</tissue>
    </source>
</reference>
<reference key="24">
    <citation type="journal article" date="2012" name="Int. J. Cell Biol.">
        <title>Cytoskeletal interactions at the nuclear envelope mediated by nesprins.</title>
        <authorList>
            <person name="Taranum S."/>
            <person name="Sur I."/>
            <person name="Muller R."/>
            <person name="Lu W."/>
            <person name="Rashmi R.N."/>
            <person name="Munck M."/>
            <person name="Neumann S."/>
            <person name="Karakesisoglou I."/>
            <person name="Noegel A.A."/>
        </authorList>
    </citation>
    <scope>TISSUE SPECIFICITY</scope>
    <scope>INTERACTION WITH SYNE3</scope>
</reference>
<reference key="25">
    <citation type="journal article" date="2013" name="PLoS ONE">
        <title>Large-scale modelling of the divergent spectrin repeats in nesprins: giant modular proteins.</title>
        <authorList>
            <person name="Autore F."/>
            <person name="Pfuhl M."/>
            <person name="Quan X."/>
            <person name="Williams A."/>
            <person name="Roberts R.G."/>
            <person name="Shanahan C.M."/>
            <person name="Fraternali F."/>
        </authorList>
    </citation>
    <scope>SPECTRIN REPEATS</scope>
</reference>
<reference key="26">
    <citation type="journal article" date="2014" name="J. Proteomics">
        <title>An enzyme assisted RP-RPLC approach for in-depth analysis of human liver phosphoproteome.</title>
        <authorList>
            <person name="Bian Y."/>
            <person name="Song C."/>
            <person name="Cheng K."/>
            <person name="Dong M."/>
            <person name="Wang F."/>
            <person name="Huang J."/>
            <person name="Sun D."/>
            <person name="Wang L."/>
            <person name="Ye M."/>
            <person name="Zou H."/>
        </authorList>
    </citation>
    <scope>PHOSPHORYLATION [LARGE SCALE ANALYSIS] AT SER-8223 AND THR-8360</scope>
    <scope>IDENTIFICATION BY MASS SPECTROMETRY [LARGE SCALE ANALYSIS]</scope>
    <source>
        <tissue>Liver</tissue>
    </source>
</reference>
<reference key="27">
    <citation type="journal article" date="2017" name="J. Cell Biol.">
        <title>Outer nuclear membrane protein Kuduk modulates the LINC complex and nuclear envelope architecture.</title>
        <authorList>
            <person name="Ding Z.Y."/>
            <person name="Wang Y.H."/>
            <person name="Huang Y.C."/>
            <person name="Lee M.C."/>
            <person name="Tseng M.J."/>
            <person name="Chi Y.H."/>
            <person name="Huang M.L."/>
        </authorList>
    </citation>
    <scope>INTERACTION WITH TMEM258</scope>
</reference>
<reference key="28">
    <citation type="journal article" date="2012" name="Cell">
        <title>LINC complexes form by binding of three KASH peptides to domain interfaces of trimeric SUN proteins.</title>
        <authorList>
            <person name="Sosa B.A."/>
            <person name="Rothballer A."/>
            <person name="Kutay U."/>
            <person name="Schwartz T.U."/>
        </authorList>
    </citation>
    <scope>X-RAY CRYSTALLOGRAPHY (2.32 ANGSTROMS) OF 8769-8797 IN COMPLEX WITH SUN2</scope>
    <scope>SUBUNIT</scope>
</reference>
<reference key="29">
    <citation type="journal article" date="2006" name="Science">
        <title>The consensus coding sequences of human breast and colorectal cancers.</title>
        <authorList>
            <person name="Sjoeblom T."/>
            <person name="Jones S."/>
            <person name="Wood L.D."/>
            <person name="Parsons D.W."/>
            <person name="Lin J."/>
            <person name="Barber T.D."/>
            <person name="Mandelker D."/>
            <person name="Leary R.J."/>
            <person name="Ptak J."/>
            <person name="Silliman N."/>
            <person name="Szabo S."/>
            <person name="Buckhaults P."/>
            <person name="Farrell C."/>
            <person name="Meeh P."/>
            <person name="Markowitz S.D."/>
            <person name="Willis J."/>
            <person name="Dawson D."/>
            <person name="Willson J.K.V."/>
            <person name="Gazdar A.F."/>
            <person name="Hartigan J."/>
            <person name="Wu L."/>
            <person name="Liu C."/>
            <person name="Parmigiani G."/>
            <person name="Park B.H."/>
            <person name="Bachman K.E."/>
            <person name="Papadopoulos N."/>
            <person name="Vogelstein B."/>
            <person name="Kinzler K.W."/>
            <person name="Velculescu V.E."/>
        </authorList>
    </citation>
    <scope>VARIANTS COLORECTAL CANCER [LARGE SCALE ANALYSIS] MET-3671; ASP-4210; HIS-4223; ARG-5507 AND HIS-8468</scope>
</reference>
<reference key="30">
    <citation type="journal article" date="2007" name="Hum. Mol. Genet.">
        <title>Nesprin-1 and -2 are involved in the pathogenesis of Emery Dreifuss muscular dystrophy and are critical for nuclear envelope integrity.</title>
        <authorList>
            <person name="Zhang Q."/>
            <person name="Bethmann C."/>
            <person name="Worth N.F."/>
            <person name="Davies J.D."/>
            <person name="Wasner C."/>
            <person name="Feuer A."/>
            <person name="Ragnauth C.D."/>
            <person name="Yi Q."/>
            <person name="Mellad J.A."/>
            <person name="Warren D.T."/>
            <person name="Wheeler M.A."/>
            <person name="Ellis J.A."/>
            <person name="Skepper J.N."/>
            <person name="Vorgerd M."/>
            <person name="Schlotter-Weigel B."/>
            <person name="Weissberg P.L."/>
            <person name="Roberts R.G."/>
            <person name="Wehnert M."/>
            <person name="Shanahan C.M."/>
        </authorList>
    </citation>
    <scope>VARIANTS EDMD4 HIS-8095; LEU-8387 AND LYS-8461</scope>
</reference>
<reference key="31">
    <citation type="journal article" date="2013" name="J. Med. Genet.">
        <title>Identification of pathogenic gene variants in small families with intellectually disabled siblings by exome sequencing.</title>
        <authorList>
            <person name="Schuurs-Hoeijmakers J.H."/>
            <person name="Vulto-van Silfhout A.T."/>
            <person name="Vissers L.E."/>
            <person name="van de Vondervoort I.I."/>
            <person name="van Bon B.W."/>
            <person name="de Ligt J."/>
            <person name="Gilissen C."/>
            <person name="Hehir-Kwa J.Y."/>
            <person name="Neveling K."/>
            <person name="del Rosario M."/>
            <person name="Hira G."/>
            <person name="Reitano S."/>
            <person name="Vitello A."/>
            <person name="Failla P."/>
            <person name="Greco D."/>
            <person name="Fichera M."/>
            <person name="Galesi O."/>
            <person name="Kleefstra T."/>
            <person name="Greally M.T."/>
            <person name="Ockeloen C.W."/>
            <person name="Willemsen M.H."/>
            <person name="Bongers E.M."/>
            <person name="Janssen I.M."/>
            <person name="Pfundt R."/>
            <person name="Veltman J.A."/>
            <person name="Romano C."/>
            <person name="Willemsen M.A."/>
            <person name="van Bokhoven H."/>
            <person name="Brunner H.G."/>
            <person name="de Vries B.B."/>
            <person name="de Brouwer A.P."/>
        </authorList>
    </citation>
    <scope>VARIANTS ARG-655; THR-3088 AND SER-3892</scope>
</reference>
<reference key="32">
    <citation type="journal article" date="2015" name="Proc. Natl. Acad. Sci. U.S.A.">
        <title>Neomorphic effects of recurrent somatic mutations in Yin Yang 1 in insulin-producing adenomas.</title>
        <authorList>
            <person name="Cromer M.K."/>
            <person name="Choi M."/>
            <person name="Nelson-Williams C."/>
            <person name="Fonseca A.L."/>
            <person name="Kunstman J.W."/>
            <person name="Korah R.M."/>
            <person name="Overton J.D."/>
            <person name="Mane S."/>
            <person name="Kenney B."/>
            <person name="Malchoff C.D."/>
            <person name="Stalberg P."/>
            <person name="Akerstroem G."/>
            <person name="Westin G."/>
            <person name="Hellman P."/>
            <person name="Carling T."/>
            <person name="Bjoerklund P."/>
            <person name="Lifton R.P."/>
        </authorList>
    </citation>
    <scope>VARIANT SER-1062</scope>
</reference>
<reference key="33">
    <citation type="journal article" date="2014" name="Hum. Mol. Genet.">
        <title>Mutations in CNTNAP1 and ADCY6 are responsible for severe arthrogryposis multiplex congenita with axoglial defects.</title>
        <authorList>
            <person name="Laquerriere A."/>
            <person name="Maluenda J."/>
            <person name="Camus A."/>
            <person name="Fontenas L."/>
            <person name="Dieterich K."/>
            <person name="Nolent F."/>
            <person name="Zhou J."/>
            <person name="Monnier N."/>
            <person name="Latour P."/>
            <person name="Gentil D."/>
            <person name="Heron D."/>
            <person name="Desguerres I."/>
            <person name="Landrieu P."/>
            <person name="Beneteau C."/>
            <person name="Delaporte B."/>
            <person name="Bellesme C."/>
            <person name="Baumann C."/>
            <person name="Capri Y."/>
            <person name="Goldenberg A."/>
            <person name="Lyonnet S."/>
            <person name="Bonneau D."/>
            <person name="Estournet B."/>
            <person name="Quijano-Roy S."/>
            <person name="Francannet C."/>
            <person name="Odent S."/>
            <person name="Saint-Frison M.H."/>
            <person name="Sigaudy S."/>
            <person name="Figarella-Branger D."/>
            <person name="Gelot A."/>
            <person name="Mussini J.M."/>
            <person name="Lacroix C."/>
            <person name="Drouin-Garraud V."/>
            <person name="Malinge M.C."/>
            <person name="Attie-Bitach T."/>
            <person name="Bessieres B."/>
            <person name="Bonniere M."/>
            <person name="Encha-Razavi F."/>
            <person name="Beaufrere A.M."/>
            <person name="Khung-Savatovsky S."/>
            <person name="Perez M.J."/>
            <person name="Vasiljevic A."/>
            <person name="Mercier S."/>
            <person name="Roume J."/>
            <person name="Trestard L."/>
            <person name="Saugier-Veber P."/>
            <person name="Cordier M.P."/>
            <person name="Layet V."/>
            <person name="Legendre M."/>
            <person name="Vigouroux-Castera A."/>
            <person name="Lunardi J."/>
            <person name="Bayes M."/>
            <person name="Jouk P.S."/>
            <person name="Rigonnot L."/>
            <person name="Granier M."/>
            <person name="Sternberg D."/>
            <person name="Warszawski J."/>
            <person name="Gut I."/>
            <person name="Gonzales M."/>
            <person name="Tawk M."/>
            <person name="Melki J."/>
        </authorList>
    </citation>
    <scope>VARIANT AMC3 8193-ARG--LEU-8797 DEL</scope>
    <scope>INVOLVEMENT IN AMC3</scope>
</reference>
<reference key="34">
    <citation type="journal article" date="2017" name="Eur. J. Hum. Genet.">
        <title>Homozygous SYNE1 mutation causes congenital onset of muscular weakness with distal arthrogryposis: a genotype-phenotype correlation.</title>
        <authorList>
            <person name="Baumann M."/>
            <person name="Steichen-Gersdorf E."/>
            <person name="Krabichler B."/>
            <person name="Petersen B.S."/>
            <person name="Weber U."/>
            <person name="Schmidt W.M."/>
            <person name="Zschocke J."/>
            <person name="Mueller T."/>
            <person name="Bittner R.E."/>
            <person name="Janecke A.R."/>
        </authorList>
    </citation>
    <scope>VARIANT AMC3 8746-ARG--LEU-8797 DEL</scope>
    <scope>INVOLVEMENT IN AMC3</scope>
</reference>
<dbReference type="EMBL" id="AY061755">
    <property type="protein sequence ID" value="AAL33798.1"/>
    <property type="molecule type" value="mRNA"/>
</dbReference>
<dbReference type="EMBL" id="AY061756">
    <property type="protein sequence ID" value="AAL33799.1"/>
    <property type="molecule type" value="mRNA"/>
</dbReference>
<dbReference type="EMBL" id="AY184203">
    <property type="protein sequence ID" value="AAO27771.1"/>
    <property type="molecule type" value="mRNA"/>
</dbReference>
<dbReference type="EMBL" id="AY184206">
    <property type="protein sequence ID" value="AAO27774.1"/>
    <property type="molecule type" value="mRNA"/>
</dbReference>
<dbReference type="EMBL" id="AF535142">
    <property type="protein sequence ID" value="AAN03486.1"/>
    <property type="molecule type" value="mRNA"/>
</dbReference>
<dbReference type="EMBL" id="AF444779">
    <property type="protein sequence ID" value="AAL38031.1"/>
    <property type="molecule type" value="mRNA"/>
</dbReference>
<dbReference type="EMBL" id="FM162565">
    <property type="protein sequence ID" value="CAQ57272.1"/>
    <property type="molecule type" value="mRNA"/>
</dbReference>
<dbReference type="EMBL" id="AF495910">
    <property type="protein sequence ID" value="AAN60442.1"/>
    <property type="molecule type" value="mRNA"/>
</dbReference>
<dbReference type="EMBL" id="AL049548">
    <property type="status" value="NOT_ANNOTATED_CDS"/>
    <property type="molecule type" value="Genomic_DNA"/>
</dbReference>
<dbReference type="EMBL" id="AL136079">
    <property type="status" value="NOT_ANNOTATED_CDS"/>
    <property type="molecule type" value="Genomic_DNA"/>
</dbReference>
<dbReference type="EMBL" id="AL589963">
    <property type="status" value="NOT_ANNOTATED_CDS"/>
    <property type="molecule type" value="Genomic_DNA"/>
</dbReference>
<dbReference type="EMBL" id="AL591507">
    <property type="status" value="NOT_ANNOTATED_CDS"/>
    <property type="molecule type" value="Genomic_DNA"/>
</dbReference>
<dbReference type="EMBL" id="AL078582">
    <property type="status" value="NOT_ANNOTATED_CDS"/>
    <property type="molecule type" value="Genomic_DNA"/>
</dbReference>
<dbReference type="EMBL" id="AL138832">
    <property type="status" value="NOT_ANNOTATED_CDS"/>
    <property type="molecule type" value="Genomic_DNA"/>
</dbReference>
<dbReference type="EMBL" id="AL357081">
    <property type="status" value="NOT_ANNOTATED_CDS"/>
    <property type="molecule type" value="Genomic_DNA"/>
</dbReference>
<dbReference type="EMBL" id="AL450401">
    <property type="status" value="NOT_ANNOTATED_CDS"/>
    <property type="molecule type" value="Genomic_DNA"/>
</dbReference>
<dbReference type="EMBL" id="KF458330">
    <property type="status" value="NOT_ANNOTATED_CDS"/>
    <property type="molecule type" value="Genomic_DNA"/>
</dbReference>
<dbReference type="EMBL" id="BC039121">
    <property type="protein sequence ID" value="AAH39121.1"/>
    <property type="status" value="ALT_INIT"/>
    <property type="molecule type" value="mRNA"/>
</dbReference>
<dbReference type="EMBL" id="AY135172">
    <property type="protein sequence ID" value="AAM95335.1"/>
    <property type="status" value="ALT_SEQ"/>
    <property type="molecule type" value="mRNA"/>
</dbReference>
<dbReference type="EMBL" id="AY183142">
    <property type="protein sequence ID" value="AAO23669.1"/>
    <property type="molecule type" value="mRNA"/>
</dbReference>
<dbReference type="EMBL" id="AK056122">
    <property type="protein sequence ID" value="BAB71097.1"/>
    <property type="status" value="ALT_SEQ"/>
    <property type="molecule type" value="mRNA"/>
</dbReference>
<dbReference type="EMBL" id="AK094094">
    <property type="protein sequence ID" value="BAC04284.1"/>
    <property type="status" value="ALT_INIT"/>
    <property type="molecule type" value="mRNA"/>
</dbReference>
<dbReference type="EMBL" id="AB051543">
    <property type="protein sequence ID" value="BAB21847.1"/>
    <property type="molecule type" value="mRNA"/>
</dbReference>
<dbReference type="EMBL" id="AL713682">
    <property type="protein sequence ID" value="CAD28486.2"/>
    <property type="status" value="ALT_INIT"/>
    <property type="molecule type" value="mRNA"/>
</dbReference>
<dbReference type="EMBL" id="AB033088">
    <property type="protein sequence ID" value="BAA86576.1"/>
    <property type="molecule type" value="mRNA"/>
</dbReference>
<dbReference type="EMBL" id="AB018339">
    <property type="protein sequence ID" value="BAA34516.2"/>
    <property type="molecule type" value="mRNA"/>
</dbReference>
<dbReference type="EMBL" id="AF043290">
    <property type="protein sequence ID" value="AAC02992.2"/>
    <property type="status" value="ALT_INIT"/>
    <property type="molecule type" value="mRNA"/>
</dbReference>
<dbReference type="CCDS" id="CCDS5236.2">
    <molecule id="Q8NF91-1"/>
</dbReference>
<dbReference type="RefSeq" id="NP_001334631.1">
    <property type="nucleotide sequence ID" value="NM_001347702.1"/>
</dbReference>
<dbReference type="RefSeq" id="NP_149062.2">
    <molecule id="Q8NF91-4"/>
    <property type="nucleotide sequence ID" value="NM_033071.5"/>
</dbReference>
<dbReference type="RefSeq" id="NP_892006.3">
    <molecule id="Q8NF91-1"/>
    <property type="nucleotide sequence ID" value="NM_182961.4"/>
</dbReference>
<dbReference type="PDB" id="4DXR">
    <property type="method" value="X-ray"/>
    <property type="resolution" value="2.32 A"/>
    <property type="chains" value="B=8769-8797"/>
</dbReference>
<dbReference type="PDB" id="6R15">
    <property type="method" value="X-ray"/>
    <property type="resolution" value="1.82 A"/>
    <property type="chains" value="B=8769-8797"/>
</dbReference>
<dbReference type="PDB" id="6XF2">
    <property type="method" value="X-ray"/>
    <property type="resolution" value="7.11 A"/>
    <property type="chains" value="A/C=2070-2200"/>
</dbReference>
<dbReference type="PDBsum" id="4DXR"/>
<dbReference type="PDBsum" id="6R15"/>
<dbReference type="PDBsum" id="6XF2"/>
<dbReference type="SASBDB" id="Q8NF91"/>
<dbReference type="SMR" id="Q8NF91"/>
<dbReference type="BioGRID" id="116928">
    <property type="interactions" value="117"/>
</dbReference>
<dbReference type="ComplexPortal" id="CPX-7667">
    <property type="entry name" value="LINC complex, SUN2-SYNE1 variant"/>
</dbReference>
<dbReference type="ComplexPortal" id="CPX-7668">
    <property type="entry name" value="LINC complex, SUN1-SYNE1 variant"/>
</dbReference>
<dbReference type="FunCoup" id="Q8NF91">
    <property type="interactions" value="1529"/>
</dbReference>
<dbReference type="IntAct" id="Q8NF91">
    <property type="interactions" value="55"/>
</dbReference>
<dbReference type="MINT" id="Q8NF91"/>
<dbReference type="STRING" id="9606.ENSP00000356224"/>
<dbReference type="CarbonylDB" id="Q8NF91"/>
<dbReference type="GlyCosmos" id="Q8NF91">
    <property type="glycosylation" value="2 sites, 2 glycans"/>
</dbReference>
<dbReference type="GlyGen" id="Q8NF91">
    <property type="glycosylation" value="12 sites, 2 O-linked glycans (10 sites)"/>
</dbReference>
<dbReference type="iPTMnet" id="Q8NF91"/>
<dbReference type="PhosphoSitePlus" id="Q8NF91"/>
<dbReference type="SwissPalm" id="Q8NF91"/>
<dbReference type="BioMuta" id="SYNE1"/>
<dbReference type="DMDM" id="425906075"/>
<dbReference type="jPOST" id="Q8NF91"/>
<dbReference type="MassIVE" id="Q8NF91"/>
<dbReference type="PaxDb" id="9606-ENSP00000356224"/>
<dbReference type="PeptideAtlas" id="Q8NF91"/>
<dbReference type="ProteomicsDB" id="17580"/>
<dbReference type="ProteomicsDB" id="34724"/>
<dbReference type="ProteomicsDB" id="73268">
    <molecule id="Q8NF91-1"/>
</dbReference>
<dbReference type="ProteomicsDB" id="73269">
    <molecule id="Q8NF91-2"/>
</dbReference>
<dbReference type="ProteomicsDB" id="73270">
    <molecule id="Q8NF91-3"/>
</dbReference>
<dbReference type="ProteomicsDB" id="73271">
    <molecule id="Q8NF91-4"/>
</dbReference>
<dbReference type="ProteomicsDB" id="73272">
    <molecule id="Q8NF91-5"/>
</dbReference>
<dbReference type="ProteomicsDB" id="73273">
    <molecule id="Q8NF91-6"/>
</dbReference>
<dbReference type="ProteomicsDB" id="73274">
    <molecule id="Q8NF91-7"/>
</dbReference>
<dbReference type="ProteomicsDB" id="73275">
    <molecule id="Q8NF91-8"/>
</dbReference>
<dbReference type="ProteomicsDB" id="73276">
    <molecule id="Q8NF91-9"/>
</dbReference>
<dbReference type="Pumba" id="Q8NF91"/>
<dbReference type="Antibodypedia" id="19931">
    <property type="antibodies" value="168 antibodies from 27 providers"/>
</dbReference>
<dbReference type="Ensembl" id="ENST00000367253.8">
    <molecule id="Q8NF91-6"/>
    <property type="protein sequence ID" value="ENSP00000356222.4"/>
    <property type="gene ID" value="ENSG00000131018.25"/>
</dbReference>
<dbReference type="Ensembl" id="ENST00000367255.10">
    <molecule id="Q8NF91-1"/>
    <property type="protein sequence ID" value="ENSP00000356224.5"/>
    <property type="gene ID" value="ENSG00000131018.25"/>
</dbReference>
<dbReference type="Ensembl" id="ENST00000413186.6">
    <molecule id="Q8NF91-5"/>
    <property type="protein sequence ID" value="ENSP00000414510.2"/>
    <property type="gene ID" value="ENSG00000131018.25"/>
</dbReference>
<dbReference type="GeneID" id="23345"/>
<dbReference type="KEGG" id="hsa:23345"/>
<dbReference type="MANE-Select" id="ENST00000367255.10">
    <property type="protein sequence ID" value="ENSP00000356224.5"/>
    <property type="RefSeq nucleotide sequence ID" value="NM_182961.4"/>
    <property type="RefSeq protein sequence ID" value="NP_892006.3"/>
</dbReference>
<dbReference type="UCSC" id="uc003qot.5">
    <molecule id="Q8NF91-1"/>
    <property type="organism name" value="human"/>
</dbReference>
<dbReference type="UCSC" id="uc003qov.4">
    <property type="organism name" value="human"/>
</dbReference>
<dbReference type="AGR" id="HGNC:17089"/>
<dbReference type="CTD" id="23345"/>
<dbReference type="DisGeNET" id="23345"/>
<dbReference type="GeneCards" id="SYNE1"/>
<dbReference type="GeneReviews" id="SYNE1"/>
<dbReference type="HGNC" id="HGNC:17089">
    <property type="gene designation" value="SYNE1"/>
</dbReference>
<dbReference type="HPA" id="ENSG00000131018">
    <property type="expression patterns" value="Tissue enhanced (brain, choroid plexus)"/>
</dbReference>
<dbReference type="MalaCards" id="SYNE1"/>
<dbReference type="MIM" id="608441">
    <property type="type" value="gene"/>
</dbReference>
<dbReference type="MIM" id="610743">
    <property type="type" value="phenotype"/>
</dbReference>
<dbReference type="MIM" id="612998">
    <property type="type" value="phenotype"/>
</dbReference>
<dbReference type="MIM" id="618484">
    <property type="type" value="phenotype"/>
</dbReference>
<dbReference type="neXtProt" id="NX_Q8NF91"/>
<dbReference type="OpenTargets" id="ENSG00000131018"/>
<dbReference type="Orphanet" id="98853">
    <property type="disease" value="Autosomal dominant Emery-Dreifuss muscular dystrophy"/>
</dbReference>
<dbReference type="Orphanet" id="88644">
    <property type="disease" value="Autosomal recessive ataxia, Beauce type"/>
</dbReference>
<dbReference type="Orphanet" id="319332">
    <property type="disease" value="Autosomal recessive myogenic arthrogryposis multiplex congenita"/>
</dbReference>
<dbReference type="PharmGKB" id="PA134975331"/>
<dbReference type="VEuPathDB" id="HostDB:ENSG00000131018"/>
<dbReference type="eggNOG" id="KOG0516">
    <property type="taxonomic scope" value="Eukaryota"/>
</dbReference>
<dbReference type="GeneTree" id="ENSGT00940000154481"/>
<dbReference type="HOGENOM" id="CLU_000025_1_0_1"/>
<dbReference type="InParanoid" id="Q8NF91"/>
<dbReference type="OMA" id="ANEMFTT"/>
<dbReference type="OrthoDB" id="18853at2759"/>
<dbReference type="PAN-GO" id="Q8NF91">
    <property type="GO annotations" value="0 GO annotations based on evolutionary models"/>
</dbReference>
<dbReference type="TreeFam" id="TF329280"/>
<dbReference type="PathwayCommons" id="Q8NF91"/>
<dbReference type="Reactome" id="R-HSA-1221632">
    <property type="pathway name" value="Meiotic synapsis"/>
</dbReference>
<dbReference type="SignaLink" id="Q8NF91"/>
<dbReference type="SIGNOR" id="Q8NF91"/>
<dbReference type="BioGRID-ORCS" id="23345">
    <property type="hits" value="10 hits in 1150 CRISPR screens"/>
</dbReference>
<dbReference type="CD-CODE" id="232F8A39">
    <property type="entry name" value="P-body"/>
</dbReference>
<dbReference type="CD-CODE" id="DEE660B4">
    <property type="entry name" value="Stress granule"/>
</dbReference>
<dbReference type="CD-CODE" id="FB4E32DD">
    <property type="entry name" value="Presynaptic clusters and postsynaptic densities"/>
</dbReference>
<dbReference type="ChiTaRS" id="SYNE1">
    <property type="organism name" value="human"/>
</dbReference>
<dbReference type="EvolutionaryTrace" id="Q8NF91"/>
<dbReference type="GeneWiki" id="Enaptin"/>
<dbReference type="GenomeRNAi" id="23345"/>
<dbReference type="Pharos" id="Q8NF91">
    <property type="development level" value="Tbio"/>
</dbReference>
<dbReference type="PRO" id="PR:Q8NF91"/>
<dbReference type="Proteomes" id="UP000005640">
    <property type="component" value="Chromosome 6"/>
</dbReference>
<dbReference type="RNAct" id="Q8NF91">
    <property type="molecule type" value="protein"/>
</dbReference>
<dbReference type="Bgee" id="ENSG00000131018">
    <property type="expression patterns" value="Expressed in cerebellar hemisphere and 191 other cell types or tissues"/>
</dbReference>
<dbReference type="ExpressionAtlas" id="Q8NF91">
    <property type="expression patterns" value="baseline and differential"/>
</dbReference>
<dbReference type="GO" id="GO:0005737">
    <property type="term" value="C:cytoplasm"/>
    <property type="evidence" value="ECO:0000314"/>
    <property type="project" value="UniProtKB"/>
</dbReference>
<dbReference type="GO" id="GO:0005856">
    <property type="term" value="C:cytoskeleton"/>
    <property type="evidence" value="ECO:0007669"/>
    <property type="project" value="UniProtKB-SubCell"/>
</dbReference>
<dbReference type="GO" id="GO:0005794">
    <property type="term" value="C:Golgi apparatus"/>
    <property type="evidence" value="ECO:0000314"/>
    <property type="project" value="UniProtKB"/>
</dbReference>
<dbReference type="GO" id="GO:0034993">
    <property type="term" value="C:meiotic nuclear membrane microtubule tethering complex"/>
    <property type="evidence" value="ECO:0000314"/>
    <property type="project" value="UniProtKB"/>
</dbReference>
<dbReference type="GO" id="GO:0016020">
    <property type="term" value="C:membrane"/>
    <property type="evidence" value="ECO:0000314"/>
    <property type="project" value="UniProtKB"/>
</dbReference>
<dbReference type="GO" id="GO:0005635">
    <property type="term" value="C:nuclear envelope"/>
    <property type="evidence" value="ECO:0000314"/>
    <property type="project" value="UniProtKB"/>
</dbReference>
<dbReference type="GO" id="GO:0031965">
    <property type="term" value="C:nuclear membrane"/>
    <property type="evidence" value="ECO:0000314"/>
    <property type="project" value="HPA"/>
</dbReference>
<dbReference type="GO" id="GO:0005640">
    <property type="term" value="C:nuclear outer membrane"/>
    <property type="evidence" value="ECO:0007669"/>
    <property type="project" value="UniProtKB-SubCell"/>
</dbReference>
<dbReference type="GO" id="GO:0005730">
    <property type="term" value="C:nucleolus"/>
    <property type="evidence" value="ECO:0000314"/>
    <property type="project" value="BHF-UCL"/>
</dbReference>
<dbReference type="GO" id="GO:0005654">
    <property type="term" value="C:nucleoplasm"/>
    <property type="evidence" value="ECO:0000314"/>
    <property type="project" value="HPA"/>
</dbReference>
<dbReference type="GO" id="GO:0005634">
    <property type="term" value="C:nucleus"/>
    <property type="evidence" value="ECO:0007005"/>
    <property type="project" value="UniProtKB"/>
</dbReference>
<dbReference type="GO" id="GO:0000932">
    <property type="term" value="C:P-body"/>
    <property type="evidence" value="ECO:0000314"/>
    <property type="project" value="BHF-UCL"/>
</dbReference>
<dbReference type="GO" id="GO:0045211">
    <property type="term" value="C:postsynaptic membrane"/>
    <property type="evidence" value="ECO:0000314"/>
    <property type="project" value="UniProtKB"/>
</dbReference>
<dbReference type="GO" id="GO:0030017">
    <property type="term" value="C:sarcomere"/>
    <property type="evidence" value="ECO:0000314"/>
    <property type="project" value="MGI"/>
</dbReference>
<dbReference type="GO" id="GO:0003779">
    <property type="term" value="F:actin binding"/>
    <property type="evidence" value="ECO:0000314"/>
    <property type="project" value="UniProtKB"/>
</dbReference>
<dbReference type="GO" id="GO:0051015">
    <property type="term" value="F:actin filament binding"/>
    <property type="evidence" value="ECO:0000250"/>
    <property type="project" value="UniProtKB"/>
</dbReference>
<dbReference type="GO" id="GO:0140444">
    <property type="term" value="F:cytoskeleton-nuclear membrane anchor activity"/>
    <property type="evidence" value="ECO:0000314"/>
    <property type="project" value="GO_Central"/>
</dbReference>
<dbReference type="GO" id="GO:0019899">
    <property type="term" value="F:enzyme binding"/>
    <property type="evidence" value="ECO:0000353"/>
    <property type="project" value="BHF-UCL"/>
</dbReference>
<dbReference type="GO" id="GO:0042802">
    <property type="term" value="F:identical protein binding"/>
    <property type="evidence" value="ECO:0000353"/>
    <property type="project" value="IntAct"/>
</dbReference>
<dbReference type="GO" id="GO:0005521">
    <property type="term" value="F:lamin binding"/>
    <property type="evidence" value="ECO:0000353"/>
    <property type="project" value="UniProtKB"/>
</dbReference>
<dbReference type="GO" id="GO:0042803">
    <property type="term" value="F:protein homodimerization activity"/>
    <property type="evidence" value="ECO:0000250"/>
    <property type="project" value="UniProtKB"/>
</dbReference>
<dbReference type="GO" id="GO:0003723">
    <property type="term" value="F:RNA binding"/>
    <property type="evidence" value="ECO:0007005"/>
    <property type="project" value="UniProtKB"/>
</dbReference>
<dbReference type="GO" id="GO:0007030">
    <property type="term" value="P:Golgi organization"/>
    <property type="evidence" value="ECO:0000314"/>
    <property type="project" value="UniProtKB"/>
</dbReference>
<dbReference type="GO" id="GO:0042692">
    <property type="term" value="P:muscle cell differentiation"/>
    <property type="evidence" value="ECO:0000314"/>
    <property type="project" value="UniProtKB"/>
</dbReference>
<dbReference type="GO" id="GO:0090292">
    <property type="term" value="P:nuclear matrix anchoring at nuclear membrane"/>
    <property type="evidence" value="ECO:0000314"/>
    <property type="project" value="UniProtKB"/>
</dbReference>
<dbReference type="GO" id="GO:0006997">
    <property type="term" value="P:nucleus organization"/>
    <property type="evidence" value="ECO:0000303"/>
    <property type="project" value="UniProtKB"/>
</dbReference>
<dbReference type="GO" id="GO:0007283">
    <property type="term" value="P:spermatogenesis"/>
    <property type="evidence" value="ECO:0007669"/>
    <property type="project" value="UniProtKB-KW"/>
</dbReference>
<dbReference type="CDD" id="cd21241">
    <property type="entry name" value="CH_SYNE1_rpt1"/>
    <property type="match status" value="1"/>
</dbReference>
<dbReference type="CDD" id="cd21243">
    <property type="entry name" value="CH_SYNE1_rpt2"/>
    <property type="match status" value="1"/>
</dbReference>
<dbReference type="CDD" id="cd00176">
    <property type="entry name" value="SPEC"/>
    <property type="match status" value="14"/>
</dbReference>
<dbReference type="FunFam" id="1.20.58.60:FF:000041">
    <property type="entry name" value="Nesprin-1 isoform 1"/>
    <property type="match status" value="1"/>
</dbReference>
<dbReference type="FunFam" id="1.20.58.60:FF:000073">
    <property type="entry name" value="Nesprin-1 isoform 1"/>
    <property type="match status" value="1"/>
</dbReference>
<dbReference type="FunFam" id="1.20.58.60:FF:000103">
    <property type="entry name" value="Nesprin-1 isoform 1"/>
    <property type="match status" value="1"/>
</dbReference>
<dbReference type="FunFam" id="1.20.58.60:FF:000104">
    <property type="entry name" value="Nesprin-1 isoform 1"/>
    <property type="match status" value="1"/>
</dbReference>
<dbReference type="FunFam" id="1.20.58.60:FF:000190">
    <property type="entry name" value="Nesprin-1 isoform 1"/>
    <property type="match status" value="1"/>
</dbReference>
<dbReference type="FunFam" id="1.10.418.10:FF:000033">
    <property type="entry name" value="nesprin-1 isoform X1"/>
    <property type="match status" value="1"/>
</dbReference>
<dbReference type="FunFam" id="1.10.418.10:FF:000037">
    <property type="entry name" value="nesprin-1 isoform X1"/>
    <property type="match status" value="1"/>
</dbReference>
<dbReference type="FunFam" id="1.20.58.60:FF:000139">
    <property type="entry name" value="nesprin-1 isoform X1"/>
    <property type="match status" value="1"/>
</dbReference>
<dbReference type="FunFam" id="1.20.58.60:FF:000165">
    <property type="entry name" value="nesprin-1 isoform X1"/>
    <property type="match status" value="1"/>
</dbReference>
<dbReference type="FunFam" id="1.20.58.60:FF:000221">
    <property type="entry name" value="nesprin-1 isoform X1"/>
    <property type="match status" value="1"/>
</dbReference>
<dbReference type="FunFam" id="1.20.58.60:FF:000213">
    <property type="entry name" value="nesprin-1 isoform X11"/>
    <property type="match status" value="1"/>
</dbReference>
<dbReference type="FunFam" id="1.20.58.60:FF:000119">
    <property type="entry name" value="nesprin-1 isoform X2"/>
    <property type="match status" value="1"/>
</dbReference>
<dbReference type="FunFam" id="1.20.58.60:FF:000137">
    <property type="entry name" value="nesprin-1 isoform X2"/>
    <property type="match status" value="1"/>
</dbReference>
<dbReference type="FunFam" id="1.20.58.60:FF:000148">
    <property type="entry name" value="nesprin-1 isoform X2"/>
    <property type="match status" value="1"/>
</dbReference>
<dbReference type="FunFam" id="1.20.58.60:FF:000201">
    <property type="entry name" value="nesprin-1 isoform X2"/>
    <property type="match status" value="1"/>
</dbReference>
<dbReference type="FunFam" id="1.20.58.60:FF:000168">
    <property type="entry name" value="nesprin-1 isoform X3"/>
    <property type="match status" value="1"/>
</dbReference>
<dbReference type="FunFam" id="1.20.58.60:FF:000112">
    <property type="entry name" value="nesprin-1 isoform X4"/>
    <property type="match status" value="1"/>
</dbReference>
<dbReference type="FunFam" id="1.20.58.60:FF:000154">
    <property type="entry name" value="nesprin-1 isoform X4"/>
    <property type="match status" value="1"/>
</dbReference>
<dbReference type="FunFam" id="1.20.58.60:FF:000155">
    <property type="entry name" value="nesprin-1 isoform X4"/>
    <property type="match status" value="1"/>
</dbReference>
<dbReference type="FunFam" id="1.20.58.60:FF:000177">
    <property type="entry name" value="nesprin-1 isoform X5"/>
    <property type="match status" value="1"/>
</dbReference>
<dbReference type="FunFam" id="1.20.58.60:FF:000235">
    <property type="entry name" value="Spectrin repeat containing nuclear envelope protein 1"/>
    <property type="match status" value="1"/>
</dbReference>
<dbReference type="FunFam" id="1.20.58.60:FF:000251">
    <property type="entry name" value="Spectrin repeat containing nuclear envelope protein 1"/>
    <property type="match status" value="1"/>
</dbReference>
<dbReference type="FunFam" id="1.20.58.60:FF:000285">
    <property type="entry name" value="Spectrin repeat containing nuclear envelope protein 1"/>
    <property type="match status" value="1"/>
</dbReference>
<dbReference type="FunFam" id="1.20.58.60:FF:000387">
    <property type="entry name" value="Spectrin repeat containing nuclear envelope protein 1"/>
    <property type="match status" value="1"/>
</dbReference>
<dbReference type="FunFam" id="1.20.58.60:FF:000405">
    <property type="entry name" value="Spectrin repeat containing nuclear envelope protein 1"/>
    <property type="match status" value="1"/>
</dbReference>
<dbReference type="FunFam" id="1.20.58.60:FF:000126">
    <property type="entry name" value="Spectrin repeat containing, nuclear envelope 1a"/>
    <property type="match status" value="1"/>
</dbReference>
<dbReference type="FunFam" id="1.20.58.60:FF:000181">
    <property type="entry name" value="Spectrin repeat containing, nuclear envelope 1a"/>
    <property type="match status" value="1"/>
</dbReference>
<dbReference type="FunFam" id="1.20.58.60:FF:000182">
    <property type="entry name" value="Spectrin repeat containing, nuclear envelope 1a"/>
    <property type="match status" value="1"/>
</dbReference>
<dbReference type="FunFam" id="1.20.58.60:FF:000193">
    <property type="entry name" value="Spectrin repeat containing, nuclear envelope 1a"/>
    <property type="match status" value="1"/>
</dbReference>
<dbReference type="FunFam" id="1.20.58.60:FF:000231">
    <property type="entry name" value="Spectrin repeat containing, nuclear envelope 1a"/>
    <property type="match status" value="1"/>
</dbReference>
<dbReference type="FunFam" id="1.20.58.60:FF:000267">
    <property type="entry name" value="Spectrin repeat containing, nuclear envelope 1a"/>
    <property type="match status" value="1"/>
</dbReference>
<dbReference type="FunFam" id="1.20.58.60:FF:000359">
    <property type="entry name" value="Spectrin repeat containing, nuclear envelope 1a"/>
    <property type="match status" value="1"/>
</dbReference>
<dbReference type="Gene3D" id="1.20.58.60">
    <property type="match status" value="33"/>
</dbReference>
<dbReference type="Gene3D" id="1.10.418.10">
    <property type="entry name" value="Calponin-like domain"/>
    <property type="match status" value="2"/>
</dbReference>
<dbReference type="InterPro" id="IPR001589">
    <property type="entry name" value="Actinin_actin-bd_CS"/>
</dbReference>
<dbReference type="InterPro" id="IPR001715">
    <property type="entry name" value="CH_dom"/>
</dbReference>
<dbReference type="InterPro" id="IPR036872">
    <property type="entry name" value="CH_dom_sf"/>
</dbReference>
<dbReference type="InterPro" id="IPR047290">
    <property type="entry name" value="CH_SYNE1_rpt1"/>
</dbReference>
<dbReference type="InterPro" id="IPR047291">
    <property type="entry name" value="CH_SYNE1_rpt2"/>
</dbReference>
<dbReference type="InterPro" id="IPR012315">
    <property type="entry name" value="KASH"/>
</dbReference>
<dbReference type="InterPro" id="IPR018159">
    <property type="entry name" value="Spectrin/alpha-actinin"/>
</dbReference>
<dbReference type="InterPro" id="IPR002017">
    <property type="entry name" value="Spectrin_repeat"/>
</dbReference>
<dbReference type="InterPro" id="IPR057057">
    <property type="entry name" value="Spectrin_SYNE1"/>
</dbReference>
<dbReference type="InterPro" id="IPR056887">
    <property type="entry name" value="SYNE1/2_dom"/>
</dbReference>
<dbReference type="PANTHER" id="PTHR14514:SF3">
    <property type="entry name" value="NESPRIN-1"/>
    <property type="match status" value="1"/>
</dbReference>
<dbReference type="PANTHER" id="PTHR14514">
    <property type="entry name" value="PKA ANCHORING PROTEIN"/>
    <property type="match status" value="1"/>
</dbReference>
<dbReference type="Pfam" id="PF00307">
    <property type="entry name" value="CH"/>
    <property type="match status" value="2"/>
</dbReference>
<dbReference type="Pfam" id="PF10541">
    <property type="entry name" value="KASH"/>
    <property type="match status" value="1"/>
</dbReference>
<dbReference type="Pfam" id="PF00435">
    <property type="entry name" value="Spectrin"/>
    <property type="match status" value="11"/>
</dbReference>
<dbReference type="Pfam" id="PF25034">
    <property type="entry name" value="Spectrin_SYNE1"/>
    <property type="match status" value="1"/>
</dbReference>
<dbReference type="Pfam" id="PF25035">
    <property type="entry name" value="SYNE1"/>
    <property type="match status" value="1"/>
</dbReference>
<dbReference type="SMART" id="SM00033">
    <property type="entry name" value="CH"/>
    <property type="match status" value="2"/>
</dbReference>
<dbReference type="SMART" id="SM01249">
    <property type="entry name" value="KASH"/>
    <property type="match status" value="1"/>
</dbReference>
<dbReference type="SMART" id="SM00150">
    <property type="entry name" value="SPEC"/>
    <property type="match status" value="45"/>
</dbReference>
<dbReference type="SUPFAM" id="SSF47576">
    <property type="entry name" value="Calponin-homology domain, CH-domain"/>
    <property type="match status" value="1"/>
</dbReference>
<dbReference type="SUPFAM" id="SSF46966">
    <property type="entry name" value="Spectrin repeat"/>
    <property type="match status" value="48"/>
</dbReference>
<dbReference type="PROSITE" id="PS00019">
    <property type="entry name" value="ACTININ_1"/>
    <property type="match status" value="1"/>
</dbReference>
<dbReference type="PROSITE" id="PS00020">
    <property type="entry name" value="ACTININ_2"/>
    <property type="match status" value="1"/>
</dbReference>
<dbReference type="PROSITE" id="PS50021">
    <property type="entry name" value="CH"/>
    <property type="match status" value="2"/>
</dbReference>
<dbReference type="PROSITE" id="PS51049">
    <property type="entry name" value="KASH"/>
    <property type="match status" value="1"/>
</dbReference>
<evidence type="ECO:0000250" key="1">
    <source>
        <dbReference type="UniProtKB" id="Q6ZWR6"/>
    </source>
</evidence>
<evidence type="ECO:0000250" key="2">
    <source>
        <dbReference type="UniProtKB" id="Q8WXH0"/>
    </source>
</evidence>
<evidence type="ECO:0000255" key="3"/>
<evidence type="ECO:0000255" key="4">
    <source>
        <dbReference type="PROSITE-ProRule" id="PRU00044"/>
    </source>
</evidence>
<evidence type="ECO:0000255" key="5">
    <source>
        <dbReference type="PROSITE-ProRule" id="PRU00385"/>
    </source>
</evidence>
<evidence type="ECO:0000256" key="6">
    <source>
        <dbReference type="SAM" id="MobiDB-lite"/>
    </source>
</evidence>
<evidence type="ECO:0000269" key="7">
    <source>
    </source>
</evidence>
<evidence type="ECO:0000269" key="8">
    <source>
    </source>
</evidence>
<evidence type="ECO:0000269" key="9">
    <source>
    </source>
</evidence>
<evidence type="ECO:0000269" key="10">
    <source>
    </source>
</evidence>
<evidence type="ECO:0000269" key="11">
    <source>
    </source>
</evidence>
<evidence type="ECO:0000269" key="12">
    <source>
    </source>
</evidence>
<evidence type="ECO:0000269" key="13">
    <source>
    </source>
</evidence>
<evidence type="ECO:0000269" key="14">
    <source>
    </source>
</evidence>
<evidence type="ECO:0000269" key="15">
    <source>
    </source>
</evidence>
<evidence type="ECO:0000269" key="16">
    <source>
    </source>
</evidence>
<evidence type="ECO:0000269" key="17">
    <source>
    </source>
</evidence>
<evidence type="ECO:0000269" key="18">
    <source>
    </source>
</evidence>
<evidence type="ECO:0000269" key="19">
    <source>
    </source>
</evidence>
<evidence type="ECO:0000269" key="20">
    <source>
    </source>
</evidence>
<evidence type="ECO:0000269" key="21">
    <source>
    </source>
</evidence>
<evidence type="ECO:0000269" key="22">
    <source>
    </source>
</evidence>
<evidence type="ECO:0000269" key="23">
    <source>
    </source>
</evidence>
<evidence type="ECO:0000269" key="24">
    <source>
    </source>
</evidence>
<evidence type="ECO:0000269" key="25">
    <source>
    </source>
</evidence>
<evidence type="ECO:0000269" key="26">
    <source>
    </source>
</evidence>
<evidence type="ECO:0000269" key="27">
    <source ref="6"/>
</evidence>
<evidence type="ECO:0000303" key="28">
    <source>
    </source>
</evidence>
<evidence type="ECO:0000303" key="29">
    <source>
    </source>
</evidence>
<evidence type="ECO:0000303" key="30">
    <source>
    </source>
</evidence>
<evidence type="ECO:0000303" key="31">
    <source>
    </source>
</evidence>
<evidence type="ECO:0000303" key="32">
    <source>
    </source>
</evidence>
<evidence type="ECO:0000303" key="33">
    <source>
    </source>
</evidence>
<evidence type="ECO:0000303" key="34">
    <source>
    </source>
</evidence>
<evidence type="ECO:0000303" key="35">
    <source>
    </source>
</evidence>
<evidence type="ECO:0000303" key="36">
    <source ref="6"/>
</evidence>
<evidence type="ECO:0000305" key="37"/>
<evidence type="ECO:0000312" key="38">
    <source>
        <dbReference type="HGNC" id="HGNC:17089"/>
    </source>
</evidence>
<evidence type="ECO:0007744" key="39">
    <source>
    </source>
</evidence>
<evidence type="ECO:0007744" key="40">
    <source>
    </source>
</evidence>
<evidence type="ECO:0007829" key="41">
    <source>
        <dbReference type="PDB" id="4DXR"/>
    </source>
</evidence>
<evidence type="ECO:0007829" key="42">
    <source>
        <dbReference type="PDB" id="6R15"/>
    </source>
</evidence>
<name>SYNE1_HUMAN</name>
<keyword id="KW-0002">3D-structure</keyword>
<keyword id="KW-0009">Actin-binding</keyword>
<keyword id="KW-0025">Alternative splicing</keyword>
<keyword id="KW-0175">Coiled coil</keyword>
<keyword id="KW-0963">Cytoplasm</keyword>
<keyword id="KW-0206">Cytoskeleton</keyword>
<keyword id="KW-0221">Differentiation</keyword>
<keyword id="KW-0225">Disease variant</keyword>
<keyword id="KW-1015">Disulfide bond</keyword>
<keyword id="KW-1067">Emery-Dreifuss muscular dystrophy</keyword>
<keyword id="KW-0333">Golgi apparatus</keyword>
<keyword id="KW-0472">Membrane</keyword>
<keyword id="KW-0523">Neurodegeneration</keyword>
<keyword id="KW-0539">Nucleus</keyword>
<keyword id="KW-0597">Phosphoprotein</keyword>
<keyword id="KW-1267">Proteomics identification</keyword>
<keyword id="KW-1185">Reference proteome</keyword>
<keyword id="KW-0677">Repeat</keyword>
<keyword id="KW-0744">Spermatogenesis</keyword>
<keyword id="KW-0812">Transmembrane</keyword>
<keyword id="KW-1133">Transmembrane helix</keyword>
<accession>Q8NF91</accession>
<accession>B3W695</accession>
<accession>E7EQI5</accession>
<accession>H0Y4C0</accession>
<accession>O94890</accession>
<accession>Q3ZCV0</accession>
<accession>Q5JV19</accession>
<accession>Q5JV22</accession>
<accession>Q8N9P7</accession>
<accession>Q8TCP1</accession>
<accession>Q8WWW6</accession>
<accession>Q8WWW7</accession>
<accession>Q8WXF6</accession>
<accession>Q96N17</accession>
<accession>Q9C0A7</accession>
<accession>Q9H525</accession>
<accession>Q9H526</accession>
<accession>Q9NS36</accession>
<accession>Q9NU50</accession>
<accession>Q9UJ06</accession>
<accession>Q9UJ07</accession>
<accession>Q9ULF8</accession>
<proteinExistence type="evidence at protein level"/>